<protein>
    <recommendedName>
        <fullName evidence="38">Glutamate receptor ionotropic, NMDA 1</fullName>
        <shortName>GluN1</shortName>
    </recommendedName>
    <alternativeName>
        <fullName>Glutamate [NMDA] receptor subunit zeta-1</fullName>
    </alternativeName>
    <alternativeName>
        <fullName evidence="36">N-methyl-D-aspartate receptor subunit NR1</fullName>
        <shortName>NMD-R1</shortName>
    </alternativeName>
</protein>
<keyword id="KW-0002">3D-structure</keyword>
<keyword id="KW-0025">Alternative splicing</keyword>
<keyword id="KW-0106">Calcium</keyword>
<keyword id="KW-1003">Cell membrane</keyword>
<keyword id="KW-1015">Disulfide bond</keyword>
<keyword id="KW-0325">Glycoprotein</keyword>
<keyword id="KW-0407">Ion channel</keyword>
<keyword id="KW-0406">Ion transport</keyword>
<keyword id="KW-1071">Ligand-gated ion channel</keyword>
<keyword id="KW-0460">Magnesium</keyword>
<keyword id="KW-0472">Membrane</keyword>
<keyword id="KW-0479">Metal-binding</keyword>
<keyword id="KW-0597">Phosphoprotein</keyword>
<keyword id="KW-0628">Postsynaptic cell membrane</keyword>
<keyword id="KW-0675">Receptor</keyword>
<keyword id="KW-1185">Reference proteome</keyword>
<keyword id="KW-0732">Signal</keyword>
<keyword id="KW-0770">Synapse</keyword>
<keyword id="KW-0812">Transmembrane</keyword>
<keyword id="KW-1133">Transmembrane helix</keyword>
<keyword id="KW-0813">Transport</keyword>
<keyword id="KW-0862">Zinc</keyword>
<reference key="1">
    <citation type="journal article" date="1991" name="Nature">
        <title>Molecular cloning and characterization of the rat NMDA receptor.</title>
        <authorList>
            <person name="Moriyoshi K."/>
            <person name="Masu M."/>
            <person name="Ishii T."/>
            <person name="Shigemoto R."/>
            <person name="Mizuno N."/>
            <person name="Nakanishi S."/>
        </authorList>
    </citation>
    <scope>NUCLEOTIDE SEQUENCE [GENOMIC DNA / MRNA] (ISOFORM A)</scope>
    <scope>FUNCTION</scope>
    <scope>TRANSPORTER ACTIVITY</scope>
    <scope>SUBCELLULAR LOCATION</scope>
    <source>
        <tissue>Brain</tissue>
    </source>
</reference>
<reference key="2">
    <citation type="journal article" date="1992" name="FEBS Lett.">
        <title>Combinatorial RNA splicing alters the surface charge on the NMDA receptor.</title>
        <authorList>
            <person name="Anantharam V."/>
            <person name="Panchal R."/>
            <person name="Wilson A."/>
            <person name="Koltchin V.V."/>
            <person name="Treistman S.N."/>
            <person name="Bayley H."/>
        </authorList>
    </citation>
    <scope>NUCLEOTIDE SEQUENCE [MRNA] (ISOFORM B)</scope>
    <scope>ALTERNATIVE SPLICING</scope>
    <source>
        <tissue>Brain</tissue>
    </source>
</reference>
<reference key="3">
    <citation type="journal article" date="1992" name="Proc. Natl. Acad. Sci. U.S.A.">
        <title>Alternative splicing generates functionally distinct N-methyl-D-aspartate receptors.</title>
        <authorList>
            <person name="Nakanishi N."/>
            <person name="Axel R."/>
            <person name="Shneider N.A."/>
        </authorList>
    </citation>
    <scope>NUCLEOTIDE SEQUENCE [MRNA] (ISOFORMS A AND B)</scope>
    <scope>ALTERNATIVE SPLICING</scope>
    <scope>FUNCTION</scope>
    <scope>TRANSPORTER ACTIVITY</scope>
    <scope>SUBCELLULAR LOCATION</scope>
</reference>
<reference key="4">
    <citation type="journal article" date="1993" name="Neuron">
        <title>Zinc potentiates agonist-induced currents at certain splice variants of the NMDA receptor.</title>
        <authorList>
            <person name="Hollmann M."/>
            <person name="Boulter J."/>
            <person name="Maron C."/>
            <person name="Beasley L."/>
            <person name="Sullivan J."/>
            <person name="Pecht G."/>
            <person name="Heinemann S.F."/>
        </authorList>
    </citation>
    <scope>NUCLEOTIDE SEQUENCE [MRNA]</scope>
    <scope>ACTIVITY REGULATION</scope>
    <source>
        <strain>Sprague-Dawley</strain>
        <tissue>Forebrain</tissue>
    </source>
</reference>
<reference key="5">
    <citation type="journal article" date="1993" name="Biochim. Biophys. Acta">
        <title>Cloning and analysis of the 5' flanking sequence of the rat N-methyl-D-aspartate receptor 1 (NMDAR1) gene.</title>
        <authorList>
            <person name="Bai G."/>
            <person name="Kusiak J.W."/>
        </authorList>
    </citation>
    <scope>NUCLEOTIDE SEQUENCE [MRNA] OF 1-86</scope>
    <source>
        <strain>Sprague-Dawley</strain>
        <tissue>Liver</tissue>
    </source>
</reference>
<reference key="6">
    <citation type="journal article" date="1992" name="Biochem. Biophys. Res. Commun.">
        <title>Structures and properties of seven isoforms of the NMDA receptor generated by alternative splicing.</title>
        <authorList>
            <person name="Sugihara H."/>
            <person name="Moriyoshi K."/>
            <person name="Ishii T."/>
            <person name="Masu M."/>
            <person name="Nakanishi S."/>
        </authorList>
    </citation>
    <scope>ALTERNATIVE SPLICING</scope>
    <source>
        <tissue>Brain</tissue>
    </source>
</reference>
<reference key="7">
    <citation type="journal article" date="1992" name="Science">
        <title>Heteromeric NMDA receptors: molecular and functional distinction of subtypes.</title>
        <authorList>
            <person name="Monyer H."/>
            <person name="Sprengel R."/>
            <person name="Schoepfer R."/>
            <person name="Herb A."/>
            <person name="Higuchi M."/>
            <person name="Lomeli H."/>
            <person name="Burnashev N."/>
            <person name="Sakmann B."/>
            <person name="Seeburg P.H."/>
        </authorList>
    </citation>
    <scope>FUNCTION</scope>
    <scope>TRANSPORTER ACTIVITY</scope>
    <scope>SUBCELLULAR LOCATION</scope>
    <scope>SUBUNIT</scope>
    <scope>TISSUE SPECIFICITY</scope>
</reference>
<reference key="8">
    <citation type="journal article" date="1993" name="J. Biol. Chem.">
        <title>Molecular characterization of the family of the N-methyl-D-aspartate receptor subunits.</title>
        <authorList>
            <person name="Ishii T."/>
            <person name="Moriyoshi K."/>
            <person name="Sugihara H."/>
            <person name="Sakurada K."/>
            <person name="Kadotani H."/>
            <person name="Yokoi M."/>
            <person name="Akazawa C."/>
            <person name="Shigemoto R."/>
            <person name="Mizuno N."/>
            <person name="Masu M."/>
            <person name="Nakanishi S."/>
        </authorList>
    </citation>
    <scope>SUBUNIT</scope>
    <scope>FUNCTION</scope>
    <scope>TRANSPORTER ACTIVITY</scope>
    <scope>SUBCELLULAR LOCATION</scope>
</reference>
<reference key="9">
    <citation type="journal article" date="1998" name="J. Neurophysiol.">
        <title>Functional and pharmacological differences between recombinant N-methyl-D-aspartate receptors.</title>
        <authorList>
            <person name="Vicini S."/>
            <person name="Wang J.F."/>
            <person name="Li J.H."/>
            <person name="Zhu W.J."/>
            <person name="Wang Y.H."/>
            <person name="Luo J.H."/>
            <person name="Wolfe B.B."/>
            <person name="Grayson D.R."/>
        </authorList>
    </citation>
    <scope>FUNCTION</scope>
</reference>
<reference key="10">
    <citation type="journal article" date="1999" name="J. Neurosci.">
        <title>Subtype-dependence of NMDA receptor channel open probability.</title>
        <authorList>
            <person name="Chen N."/>
            <person name="Luo T."/>
            <person name="Raymond L.A."/>
        </authorList>
    </citation>
    <scope>FUNCTION</scope>
</reference>
<reference key="11">
    <citation type="journal article" date="2001" name="J. Neurosci.">
        <title>An NMDA receptor signaling complex with protein phosphatase 2A.</title>
        <authorList>
            <person name="Chan S.F."/>
            <person name="Sucher N.J."/>
        </authorList>
    </citation>
    <scope>PHOSPHORYLATION AT SER-897</scope>
    <scope>DEPHOSPHORYLATION BY PPP2CB</scope>
    <scope>IDENTIFICATION IN A COMPLEX WITH GRIN2A OR GRIN2B; GRIN3A AND PPP2CB</scope>
</reference>
<reference key="12">
    <citation type="journal article" date="2001" name="J. Neurosci.">
        <title>Assembly with the NR1 subunit is required for surface expression of NR3A-containing NMDA receptors.</title>
        <authorList>
            <person name="Perez-Otano I."/>
            <person name="Schulteis C.T."/>
            <person name="Contractor A."/>
            <person name="Lipton S.A."/>
            <person name="Trimmer J.S."/>
            <person name="Sucher N.J."/>
            <person name="Heinemann S.F."/>
        </authorList>
    </citation>
    <scope>FUNCTION</scope>
    <scope>IDENTIFICATION IN A COMPLEX WITH GRIN2A OR GRIN2B AND GRIN3A</scope>
</reference>
<reference key="13">
    <citation type="journal article" date="2002" name="J. Neurophysiol.">
        <title>Characterization and comparison of the NR3A subunit of the NMDA receptor in recombinant systems and primary cortical neurons.</title>
        <authorList>
            <person name="Sasaki Y.F."/>
            <person name="Rothe T."/>
            <person name="Premkumar L.S."/>
            <person name="Das S."/>
            <person name="Cui J."/>
            <person name="Talantova M.V."/>
            <person name="Wong H.-K."/>
            <person name="Gong X."/>
            <person name="Chan S.F."/>
            <person name="Zhang D."/>
            <person name="Nakanishi N."/>
            <person name="Sucher N.J."/>
            <person name="Lipton S.A."/>
        </authorList>
    </citation>
    <scope>FUNCTION</scope>
    <scope>IDENTIFICATION IN A COMPLEX WITH GRIN2A OR GRIN2B AND GRIN3A</scope>
</reference>
<reference key="14">
    <citation type="journal article" date="2002" name="Mol. Pharmacol.">
        <title>Association of NR3A with the N-methyl-D-aspartate receptor NR1 and NR2 subunits.</title>
        <authorList>
            <person name="Al-Hallaq R.A."/>
            <person name="Jarabek B.R."/>
            <person name="Fu Z."/>
            <person name="Vicini S."/>
            <person name="Wolfe B.B."/>
            <person name="Yasuda R.P."/>
        </authorList>
    </citation>
    <scope>IDENTIFICATION IN A COMPLEX WITH GRIN2A OR GRIN2B AND GRIN3A</scope>
</reference>
<reference key="15">
    <citation type="journal article" date="2002" name="Nature">
        <title>Excitatory glycine receptors containing the NR3 family of NMDA receptor subunits.</title>
        <authorList>
            <person name="Chatterton J.E."/>
            <person name="Awobuluyi M."/>
            <person name="Premkumar L.S."/>
            <person name="Takahashi H."/>
            <person name="Talantova M."/>
            <person name="Shin Y."/>
            <person name="Cui J."/>
            <person name="Tu S."/>
            <person name="Sevarino K.K.A."/>
            <person name="Nakanishi N."/>
            <person name="Tong G."/>
            <person name="Lipton S.A."/>
            <person name="Zhang D."/>
        </authorList>
    </citation>
    <scope>FUNCTION</scope>
    <scope>TRANSPORTER ACTIVITY</scope>
    <scope>ACTIVITY REGULATION</scope>
    <source>
        <tissue>Brain</tissue>
    </source>
</reference>
<reference key="16">
    <citation type="journal article" date="2004" name="Neuron">
        <title>SynGAP-MUPP1-CaMKII synaptic complexes regulate p38 MAP kinase activity and NMDA receptor-dependent synaptic AMPA receptor potentiation.</title>
        <authorList>
            <person name="Krapivinsky G."/>
            <person name="Medina I."/>
            <person name="Krapivinsky L."/>
            <person name="Gapon S."/>
            <person name="Clapham D.E."/>
        </authorList>
    </citation>
    <scope>INTERACTION WITH MPDZ AND DLG4</scope>
    <scope>SUBCELLULAR LOCATION</scope>
</reference>
<reference key="17">
    <citation type="journal article" date="2005" name="Neurochem. Int.">
        <title>Serines 890 and 896 of the NMDA receptor subunit NR1 are differentially phosphorylated by protein kinase C isoforms.</title>
        <authorList>
            <person name="Sanchez-Perez A.M."/>
            <person name="Felipo V."/>
        </authorList>
    </citation>
    <scope>PHOSPHORYLATION AT SER-890</scope>
</reference>
<reference key="18">
    <citation type="journal article" date="2006" name="J. Neurosci.">
        <title>A novel family of adhesion-like molecules that interacts with the NMDA receptor.</title>
        <authorList>
            <person name="Wang C.Y."/>
            <person name="Chang K."/>
            <person name="Petralia R.S."/>
            <person name="Wang Y.X."/>
            <person name="Seabold G.K."/>
            <person name="Wenthold R.J."/>
        </authorList>
    </citation>
    <scope>INTERACTION WITH LRFN2</scope>
</reference>
<reference key="19">
    <citation type="journal article" date="2006" name="Neuron">
        <title>SALM synaptic cell adhesion-like molecules regulate the differentiation of excitatory synapses.</title>
        <authorList>
            <person name="Ko J."/>
            <person name="Kim S."/>
            <person name="Chung H.S."/>
            <person name="Kim K."/>
            <person name="Han K."/>
            <person name="Kim H."/>
            <person name="Jun H."/>
            <person name="Kaang B.-K."/>
            <person name="Kim E."/>
        </authorList>
    </citation>
    <scope>INTERACTION WITH LRFN1</scope>
</reference>
<reference key="20">
    <citation type="journal article" date="2008" name="J. Mol. Biol.">
        <title>Apparent homomeric NR1 currents observed in Xenopus oocytes are caused by an endogenous NR2 subunit.</title>
        <authorList>
            <person name="Schmidt C."/>
            <person name="Hollmann M."/>
        </authorList>
    </citation>
    <scope>FUNCTION</scope>
    <scope>SUBCELLULAR LOCATION</scope>
    <scope>SUBUNIT</scope>
</reference>
<reference key="21">
    <citation type="journal article" date="2008" name="NeuroReport">
        <title>GRINL1A colocalizes with N-methyl D-aspartate receptor NR1 subunit and reduces N-methyl D-aspartate toxicity.</title>
        <authorList>
            <person name="Roginski R.S."/>
            <person name="Goubaeva F."/>
            <person name="Mikami M."/>
            <person name="Fried-Cassorla E."/>
            <person name="Nair M.R."/>
            <person name="Yang J."/>
        </authorList>
    </citation>
    <scope>INTERACTION WITH MYZAP</scope>
</reference>
<reference key="22">
    <citation type="journal article" date="2012" name="Nat. Commun.">
        <title>Quantitative maps of protein phosphorylation sites across 14 different rat organs and tissues.</title>
        <authorList>
            <person name="Lundby A."/>
            <person name="Secher A."/>
            <person name="Lage K."/>
            <person name="Nordsborg N.B."/>
            <person name="Dmytriyev A."/>
            <person name="Lundby C."/>
            <person name="Olsen J.V."/>
        </authorList>
    </citation>
    <scope>PHOSPHORYLATION [LARGE SCALE ANALYSIS] AT SER-877 (ISOFORM E)</scope>
    <scope>PHOSPHORYLATION [LARGE SCALE ANALYSIS] AT SER-898 (ISOFORM G)</scope>
    <scope>IDENTIFICATION BY MASS SPECTROMETRY [LARGE SCALE ANALYSIS]</scope>
</reference>
<reference key="23">
    <citation type="journal article" date="2013" name="J. Proteome Res.">
        <title>Site-specific glycan-peptide analysis for determination of N-glycoproteome heterogeneity.</title>
        <authorList>
            <person name="Parker B.L."/>
            <person name="Thaysen-Andersen M."/>
            <person name="Solis N."/>
            <person name="Scott N.E."/>
            <person name="Larsen M.R."/>
            <person name="Graham M.E."/>
            <person name="Packer N.H."/>
            <person name="Cordwell S.J."/>
        </authorList>
    </citation>
    <scope>GLYCOSYLATION [LARGE SCALE ANALYSIS] AT ASN-203; ASN-350; ASN-368; ASN-440 AND ASN-771</scope>
    <scope>IDENTIFICATION BY MASS SPECTROMETRY [LARGE SCALE ANALYSIS]</scope>
    <source>
        <tissue>Brain</tissue>
    </source>
</reference>
<reference key="24">
    <citation type="journal article" date="2015" name="J. Neurosci.">
        <title>GluN2B-Containing NMDA Receptors Regulate AMPA Receptor Traffic through Anchoring of the Synaptic Proteasome.</title>
        <authorList>
            <person name="Ferreira J.S."/>
            <person name="Schmidt J."/>
            <person name="Rio P."/>
            <person name="Aguas R."/>
            <person name="Rooyakkers A."/>
            <person name="Li K.W."/>
            <person name="Smit A.B."/>
            <person name="Craig A.M."/>
            <person name="Carvalho A.L."/>
        </authorList>
    </citation>
    <scope>SUBCELLULAR LOCATION</scope>
</reference>
<reference key="25">
    <citation type="journal article" date="2016" name="EMBO J.">
        <title>Synaptonuclear messenger PRR7 inhibits c-Jun ubiquitination and regulates NMDA-mediated excitotoxicity.</title>
        <authorList>
            <person name="Kravchick D.O."/>
            <person name="Karpova A."/>
            <person name="Hrdinka M."/>
            <person name="Lopez-Rojas J."/>
            <person name="Iacobas S."/>
            <person name="Carbonell A.U."/>
            <person name="Iacobas D.A."/>
            <person name="Kreutz M.R."/>
            <person name="Jordan B.A."/>
        </authorList>
    </citation>
    <scope>IDENTIFICATION IN COMPLEX WITH DLG4 AND PRR7</scope>
    <scope>IDENTIFICATION IN A COMPLEX WITH GRIN2B AND PRR7</scope>
    <scope>INTERACTION WITH PRR7</scope>
</reference>
<reference key="26">
    <citation type="journal article" date="2016" name="Mol. Pharmacol.">
        <title>A Novel Binding Mode Reveals Two Distinct Classes of NMDA Receptor GluN2B-selective Antagonists.</title>
        <authorList>
            <person name="Stroebel D."/>
            <person name="Buhl D.L."/>
            <person name="Knafels J.D."/>
            <person name="Chanda P.K."/>
            <person name="Green M."/>
            <person name="Sciabola S."/>
            <person name="Mony L."/>
            <person name="Paoletti P."/>
            <person name="Pandit J."/>
        </authorList>
    </citation>
    <scope>FUNCTION</scope>
    <scope>SUBCELLULAR LOCATION</scope>
    <scope>SUBUNIT</scope>
</reference>
<reference key="27">
    <citation type="journal article" date="2017" name="Neuron">
        <title>Allosteric Interactions between NMDA Receptor Subunits Shape the Developmental Shift in Channel Properties.</title>
        <authorList>
            <person name="Sun W."/>
            <person name="Hansen K.B."/>
            <person name="Jahr C.E."/>
        </authorList>
    </citation>
    <scope>FUNCTION</scope>
    <scope>SUBCELLULAR LOCATION</scope>
    <scope>SUBUNIT</scope>
</reference>
<reference evidence="40 41 42 43" key="28">
    <citation type="journal article" date="2003" name="EMBO J.">
        <title>Mechanisms of activation, inhibition and specificity: crystal structures of the NMDA receptor NR1 ligand-binding core.</title>
        <authorList>
            <person name="Furukawa H."/>
            <person name="Gouaux E."/>
        </authorList>
    </citation>
    <scope>X-RAY CRYSTALLOGRAPHY (1.35 ANGSTROMS) OF 394-800 IN COMPLEXES WITH GLYCINE; AGONIST D-SERINE AND ANTAGONIST</scope>
    <scope>DISULFIDE BOND</scope>
</reference>
<reference evidence="47" key="29">
    <citation type="journal article" date="2005" name="Nature">
        <title>Subunit arrangement and function in NMDA receptors.</title>
        <authorList>
            <person name="Furukawa H."/>
            <person name="Singh S.K."/>
            <person name="Mancusso R."/>
            <person name="Gouaux E."/>
        </authorList>
    </citation>
    <scope>X-RAY CRYSTALLOGRAPHY (2.0 ANGSTROMS) OF 394-800 IN COMPLEX WITH GRIN2A AND GLYCINE</scope>
    <scope>SUBUNIT</scope>
    <scope>DISULFIDE BOND</scope>
</reference>
<reference evidence="44 45 46" key="30">
    <citation type="journal article" date="2005" name="Neuron">
        <title>Mechanism of partial agonist action at the NR1 subunit of NMDA receptors.</title>
        <authorList>
            <person name="Inanobe A."/>
            <person name="Furukawa H."/>
            <person name="Gouaux E."/>
        </authorList>
    </citation>
    <scope>X-RAY CRYSTALLOGRAPHY (1.4 ANGSTROMS) OF 394-800 IN COMPLEXES WITH AGONISTS</scope>
    <scope>FUNCTION</scope>
    <scope>SUBCELLULAR LOCATION</scope>
    <scope>SUBUNIT</scope>
    <scope>DISULFIDE BOND</scope>
</reference>
<reference evidence="48" key="31">
    <citation type="journal article" date="2011" name="J. Neurosci.">
        <title>Separation of domain contacts is required for heterotetrameric assembly of functional NMDA receptors.</title>
        <authorList>
            <person name="Farina A.N."/>
            <person name="Blain K.Y."/>
            <person name="Maruo T."/>
            <person name="Kwiatkowski W."/>
            <person name="Choe S."/>
            <person name="Nakagawa T."/>
        </authorList>
    </citation>
    <scope>X-RAY CRYSTALLOGRAPHY (3.40 ANGSTROMS) OF 21-393</scope>
    <scope>SUBUNIT</scope>
    <scope>SUBCELLULAR LOCATION</scope>
    <scope>GLYCOSYLATION AT ASN-61; ASN-203; ASN-239; ASN-276 AND ASN-368</scope>
    <scope>DISULFIDE BONDS</scope>
</reference>
<reference evidence="55" key="32">
    <citation type="journal article" date="2014" name="Science">
        <title>Crystal structure of a heterotetrameric NMDA receptor ion channel.</title>
        <authorList>
            <person name="Karakas E."/>
            <person name="Furukawa H."/>
        </authorList>
    </citation>
    <scope>X-RAY CRYSTALLOGRAPHY (3.96 ANGSTROMS) OF 23-847 IN COMPLEX WITH GRIN2B; GLYCINE AND ALLOSTERIC INHIBITOR</scope>
    <scope>FUNCTION</scope>
    <scope>SUBUNIT</scope>
    <scope>SUBCELLULAR LOCATION</scope>
    <scope>TOPOLOGY</scope>
    <scope>GLYCOSYLATION AT ASN-203; ASN-276; ASN-300; ASN-368 AND ASN-440</scope>
    <scope>DISULFIDE BONDS</scope>
</reference>
<reference evidence="57 58 59 60 61" key="33">
    <citation type="journal article" date="2016" name="Nature">
        <title>Activation of NMDA receptors and the mechanism of inhibition by ifenprodil.</title>
        <authorList>
            <person name="Tajima N."/>
            <person name="Karakas E."/>
            <person name="Grant T."/>
            <person name="Simorowski N."/>
            <person name="Diaz-Avalos R."/>
            <person name="Grigorieff N."/>
            <person name="Furukawa H."/>
        </authorList>
    </citation>
    <scope>STRUCTURE BY ELECTRON MICROSCOPY (6.10 ANGSTROMS) OF 23-847 IN COMPLEX WITH GRIN2A</scope>
    <scope>FUNCTION</scope>
    <scope>SUBCELLULAR LOCATION</scope>
    <scope>SUBUNIT</scope>
    <scope>TOPOLOGY</scope>
</reference>
<reference evidence="62 63 64 65 66" key="34">
    <citation type="journal article" date="2016" name="Neuron">
        <title>Structural Basis for Negative Allosteric Modulation of GluN2A-Containing NMDA Receptors.</title>
        <authorList>
            <person name="Yi F."/>
            <person name="Mou T.C."/>
            <person name="Dorsett K.N."/>
            <person name="Volkmann R.A."/>
            <person name="Menniti F.S."/>
            <person name="Sprang S.R."/>
            <person name="Hansen K.B."/>
        </authorList>
    </citation>
    <scope>X-RAY CRYSTALLOGRAPHY (1.70 ANGSTROMS) OF 394-544 AND 663-800 IN COMPLEXES WITH GLYCINE AND GRIN2A</scope>
    <scope>FUNCTION</scope>
    <scope>SUBCELLULAR LOCATION</scope>
    <scope>SUBUNIT</scope>
    <scope>DISULFIDE BONDS</scope>
</reference>
<reference evidence="67" key="35">
    <citation type="journal article" date="2017" name="Mol. Pharmacol.">
        <title>Novel Mode of Antagonist Binding in NMDA Receptors Revealed by the Crystal Structure of the GluN1-GluN2A Ligand-Binding Domain Complexed to NVP-AAM077.</title>
        <authorList>
            <person name="Romero-Hernandez A."/>
            <person name="Furukawa H."/>
        </authorList>
    </citation>
    <scope>X-RAY CRYSTALLOGRAPHY (1.60 ANGSTROMS) OF 394-544 AND 663-800 IN COMPLEX WITH GRIN2A AND SYNTHETIC ANTAGONIST</scope>
    <scope>FUNCTION</scope>
    <scope>SUBCELLULAR LOCATION</scope>
    <scope>SUBUNIT</scope>
    <scope>DISULFIDE BONDS</scope>
</reference>
<reference evidence="56 68 69 70" key="36">
    <citation type="submission" date="2017-04" db="PDB data bank">
        <title>Crystal structure of GluN1/GluN2A NMDA receptor agonist binding domains with glycine and antagonist, phenyl-ACEPC.</title>
        <authorList>
            <person name="Mou T.C."/>
            <person name="Sprang S.R."/>
            <person name="Hansen K.B."/>
        </authorList>
    </citation>
    <scope>X-RAY CRYSTALLOGRAPHY (1.95 ANGSTROMS) OF 394-544 AND 663-800 IN COMPLEX WITH GRIN2A AND GLYCINE</scope>
    <scope>DISULFIDE BONDS</scope>
</reference>
<gene>
    <name evidence="39" type="primary">Grin1</name>
    <name evidence="37" type="synonym">Nmdar1</name>
</gene>
<name>NMDZ1_RAT</name>
<proteinExistence type="evidence at protein level"/>
<dbReference type="EMBL" id="X63255">
    <property type="protein sequence ID" value="CAA44914.1"/>
    <property type="molecule type" value="mRNA"/>
</dbReference>
<dbReference type="EMBL" id="AY157515">
    <property type="protein sequence ID" value="AAA16366.1"/>
    <property type="molecule type" value="Genomic_DNA"/>
</dbReference>
<dbReference type="EMBL" id="X65227">
    <property type="protein sequence ID" value="CAA46335.1"/>
    <property type="molecule type" value="mRNA"/>
</dbReference>
<dbReference type="EMBL" id="U08261">
    <property type="protein sequence ID" value="AAB50926.1"/>
    <property type="molecule type" value="mRNA"/>
</dbReference>
<dbReference type="EMBL" id="U08262">
    <property type="protein sequence ID" value="AAB50927.1"/>
    <property type="molecule type" value="mRNA"/>
</dbReference>
<dbReference type="EMBL" id="U08263">
    <property type="protein sequence ID" value="AAB50928.1"/>
    <property type="molecule type" value="mRNA"/>
</dbReference>
<dbReference type="EMBL" id="U08264">
    <property type="protein sequence ID" value="AAB50929.1"/>
    <property type="molecule type" value="mRNA"/>
</dbReference>
<dbReference type="EMBL" id="U08265">
    <property type="protein sequence ID" value="AAB50930.1"/>
    <property type="molecule type" value="mRNA"/>
</dbReference>
<dbReference type="EMBL" id="U08267">
    <property type="protein sequence ID" value="AAB50932.1"/>
    <property type="molecule type" value="mRNA"/>
</dbReference>
<dbReference type="EMBL" id="U08268">
    <property type="protein sequence ID" value="AAB50933.1"/>
    <property type="molecule type" value="mRNA"/>
</dbReference>
<dbReference type="EMBL" id="S39217">
    <property type="protein sequence ID" value="AAB22431.1"/>
    <property type="molecule type" value="mRNA"/>
</dbReference>
<dbReference type="EMBL" id="S39218">
    <property type="protein sequence ID" value="AAB22432.1"/>
    <property type="molecule type" value="mRNA"/>
</dbReference>
<dbReference type="EMBL" id="S39219">
    <property type="protein sequence ID" value="AAB22433.1"/>
    <property type="molecule type" value="mRNA"/>
</dbReference>
<dbReference type="EMBL" id="S39220">
    <property type="protein sequence ID" value="AAB22434.1"/>
    <property type="molecule type" value="mRNA"/>
</dbReference>
<dbReference type="EMBL" id="S39221">
    <property type="protein sequence ID" value="AAB22435.1"/>
    <property type="molecule type" value="mRNA"/>
</dbReference>
<dbReference type="PIR" id="JN0336">
    <property type="entry name" value="JN0336"/>
</dbReference>
<dbReference type="PIR" id="JN0337">
    <property type="entry name" value="JN0337"/>
</dbReference>
<dbReference type="PIR" id="JN0338">
    <property type="entry name" value="JN0338"/>
</dbReference>
<dbReference type="PIR" id="JN0339">
    <property type="entry name" value="JN0339"/>
</dbReference>
<dbReference type="PIR" id="JN0340">
    <property type="entry name" value="JN0340"/>
</dbReference>
<dbReference type="PIR" id="JN0341">
    <property type="entry name" value="JN0341"/>
</dbReference>
<dbReference type="PIR" id="JN0342">
    <property type="entry name" value="JN0342"/>
</dbReference>
<dbReference type="PIR" id="S19710">
    <property type="entry name" value="S19710"/>
</dbReference>
<dbReference type="RefSeq" id="NP_001257531.1">
    <molecule id="P35439-2"/>
    <property type="nucleotide sequence ID" value="NM_001270602.1"/>
</dbReference>
<dbReference type="RefSeq" id="NP_001257532.1">
    <molecule id="P35439-6"/>
    <property type="nucleotide sequence ID" value="NM_001270603.1"/>
</dbReference>
<dbReference type="RefSeq" id="NP_001257534.1">
    <molecule id="P35439-3"/>
    <property type="nucleotide sequence ID" value="NM_001270605.1"/>
</dbReference>
<dbReference type="RefSeq" id="NP_001257537.1">
    <molecule id="P35439-7"/>
    <property type="nucleotide sequence ID" value="NM_001270608.1"/>
</dbReference>
<dbReference type="RefSeq" id="NP_001257539.1">
    <molecule id="P35439-5"/>
    <property type="nucleotide sequence ID" value="NM_001270610.1"/>
</dbReference>
<dbReference type="RefSeq" id="NP_001274352.1">
    <molecule id="P35439-4"/>
    <property type="nucleotide sequence ID" value="NM_001287423.1"/>
</dbReference>
<dbReference type="RefSeq" id="NP_058706.1">
    <molecule id="P35439-1"/>
    <property type="nucleotide sequence ID" value="NM_017010.2"/>
</dbReference>
<dbReference type="PDB" id="1PB7">
    <property type="method" value="X-ray"/>
    <property type="resolution" value="1.35 A"/>
    <property type="chains" value="A=394-544, A=663-800"/>
</dbReference>
<dbReference type="PDB" id="1PB8">
    <property type="method" value="X-ray"/>
    <property type="resolution" value="1.45 A"/>
    <property type="chains" value="A=394-544, A=663-800"/>
</dbReference>
<dbReference type="PDB" id="1PB9">
    <property type="method" value="X-ray"/>
    <property type="resolution" value="1.60 A"/>
    <property type="chains" value="A=394-544, A=663-800"/>
</dbReference>
<dbReference type="PDB" id="1PBQ">
    <property type="method" value="X-ray"/>
    <property type="resolution" value="1.90 A"/>
    <property type="chains" value="A/B=394-544, A/B=663-800"/>
</dbReference>
<dbReference type="PDB" id="1Y1M">
    <property type="method" value="X-ray"/>
    <property type="resolution" value="1.80 A"/>
    <property type="chains" value="A/B=394-544, A/B=663-800"/>
</dbReference>
<dbReference type="PDB" id="1Y1Z">
    <property type="method" value="X-ray"/>
    <property type="resolution" value="1.50 A"/>
    <property type="chains" value="A=394-544, A=663-800"/>
</dbReference>
<dbReference type="PDB" id="1Y20">
    <property type="method" value="X-ray"/>
    <property type="resolution" value="1.40 A"/>
    <property type="chains" value="A=394-544, A=663-800"/>
</dbReference>
<dbReference type="PDB" id="2A5T">
    <property type="method" value="X-ray"/>
    <property type="resolution" value="2.00 A"/>
    <property type="chains" value="A=394-544"/>
</dbReference>
<dbReference type="PDB" id="3Q41">
    <property type="method" value="X-ray"/>
    <property type="resolution" value="3.40 A"/>
    <property type="chains" value="A/B/C=21-393"/>
</dbReference>
<dbReference type="PDB" id="4KCC">
    <property type="method" value="X-ray"/>
    <property type="resolution" value="1.89 A"/>
    <property type="chains" value="A=394-544, A=663-800"/>
</dbReference>
<dbReference type="PDB" id="4KFQ">
    <property type="method" value="X-ray"/>
    <property type="resolution" value="2.20 A"/>
    <property type="chains" value="A/B=394-544, A/B=663-800"/>
</dbReference>
<dbReference type="PDB" id="4NF4">
    <property type="method" value="X-ray"/>
    <property type="resolution" value="2.00 A"/>
    <property type="chains" value="A=394-544, A=663-800"/>
</dbReference>
<dbReference type="PDB" id="4NF5">
    <property type="method" value="X-ray"/>
    <property type="resolution" value="1.90 A"/>
    <property type="chains" value="A=394-544, A=663-800"/>
</dbReference>
<dbReference type="PDB" id="4NF6">
    <property type="method" value="X-ray"/>
    <property type="resolution" value="2.10 A"/>
    <property type="chains" value="A=394-544, A=663-800"/>
</dbReference>
<dbReference type="PDB" id="4NF8">
    <property type="method" value="X-ray"/>
    <property type="resolution" value="1.86 A"/>
    <property type="chains" value="A=394-544, A=663-800"/>
</dbReference>
<dbReference type="PDB" id="4PE5">
    <property type="method" value="X-ray"/>
    <property type="resolution" value="3.96 A"/>
    <property type="chains" value="A/C=23-847"/>
</dbReference>
<dbReference type="PDB" id="5DEX">
    <property type="method" value="X-ray"/>
    <property type="resolution" value="2.40 A"/>
    <property type="chains" value="A=394-544, A=663-800"/>
</dbReference>
<dbReference type="PDB" id="5FXG">
    <property type="method" value="EM"/>
    <property type="resolution" value="6.80 A"/>
    <property type="chains" value="A/C=23-863"/>
</dbReference>
<dbReference type="PDB" id="5FXH">
    <property type="method" value="EM"/>
    <property type="resolution" value="6.10 A"/>
    <property type="chains" value="A/C=23-863"/>
</dbReference>
<dbReference type="PDB" id="5FXI">
    <property type="method" value="EM"/>
    <property type="resolution" value="6.40 A"/>
    <property type="chains" value="A/C=23-863"/>
</dbReference>
<dbReference type="PDB" id="5FXJ">
    <property type="method" value="EM"/>
    <property type="resolution" value="6.50 A"/>
    <property type="chains" value="A/C=23-863"/>
</dbReference>
<dbReference type="PDB" id="5FXK">
    <property type="method" value="EM"/>
    <property type="resolution" value="6.40 A"/>
    <property type="chains" value="A/C=23-863"/>
</dbReference>
<dbReference type="PDB" id="5I56">
    <property type="method" value="X-ray"/>
    <property type="resolution" value="2.28 A"/>
    <property type="chains" value="A=394-544, A=663-800"/>
</dbReference>
<dbReference type="PDB" id="5I57">
    <property type="method" value="X-ray"/>
    <property type="resolution" value="1.70 A"/>
    <property type="chains" value="A=394-544, A=684-821"/>
</dbReference>
<dbReference type="PDB" id="5I58">
    <property type="method" value="X-ray"/>
    <property type="resolution" value="2.52 A"/>
    <property type="chains" value="A=394-544, A=663-800"/>
</dbReference>
<dbReference type="PDB" id="5I59">
    <property type="method" value="X-ray"/>
    <property type="resolution" value="2.25 A"/>
    <property type="chains" value="A=394-544, A=663-800"/>
</dbReference>
<dbReference type="PDB" id="5JTY">
    <property type="method" value="X-ray"/>
    <property type="resolution" value="2.72 A"/>
    <property type="chains" value="A=394-544, A=684-821"/>
</dbReference>
<dbReference type="PDB" id="5U8C">
    <property type="method" value="X-ray"/>
    <property type="resolution" value="1.60 A"/>
    <property type="chains" value="A=394-544, A=663-800"/>
</dbReference>
<dbReference type="PDB" id="5VIH">
    <property type="method" value="X-ray"/>
    <property type="resolution" value="2.40 A"/>
    <property type="chains" value="A=394-544, A=663-800"/>
</dbReference>
<dbReference type="PDB" id="5VII">
    <property type="method" value="X-ray"/>
    <property type="resolution" value="1.95 A"/>
    <property type="chains" value="A=394-544, A=663-800"/>
</dbReference>
<dbReference type="PDB" id="5VIJ">
    <property type="method" value="X-ray"/>
    <property type="resolution" value="2.10 A"/>
    <property type="chains" value="A=394-544, A=663-800"/>
</dbReference>
<dbReference type="PDB" id="6CNA">
    <property type="method" value="EM"/>
    <property type="resolution" value="4.60 A"/>
    <property type="chains" value="A/C=25-838"/>
</dbReference>
<dbReference type="PDB" id="6MM9">
    <property type="method" value="EM"/>
    <property type="resolution" value="5.97 A"/>
    <property type="chains" value="A/C=1-838"/>
</dbReference>
<dbReference type="PDB" id="6MMA">
    <property type="method" value="EM"/>
    <property type="resolution" value="6.31 A"/>
    <property type="chains" value="A/C=1-838"/>
</dbReference>
<dbReference type="PDB" id="6MMB">
    <property type="method" value="EM"/>
    <property type="resolution" value="12.70 A"/>
    <property type="chains" value="A/C=1-838"/>
</dbReference>
<dbReference type="PDB" id="6MMG">
    <property type="method" value="EM"/>
    <property type="resolution" value="6.23 A"/>
    <property type="chains" value="A/C=1-838"/>
</dbReference>
<dbReference type="PDB" id="6MMH">
    <property type="method" value="EM"/>
    <property type="resolution" value="8.21 A"/>
    <property type="chains" value="A/C=1-838"/>
</dbReference>
<dbReference type="PDB" id="6MMI">
    <property type="method" value="EM"/>
    <property type="resolution" value="8.93 A"/>
    <property type="chains" value="A/C=1-838"/>
</dbReference>
<dbReference type="PDB" id="6MMJ">
    <property type="method" value="EM"/>
    <property type="resolution" value="16.50 A"/>
    <property type="chains" value="A/C=1-838"/>
</dbReference>
<dbReference type="PDB" id="6MMK">
    <property type="method" value="EM"/>
    <property type="resolution" value="6.08 A"/>
    <property type="chains" value="A/C=1-838"/>
</dbReference>
<dbReference type="PDB" id="6MML">
    <property type="method" value="EM"/>
    <property type="resolution" value="7.14 A"/>
    <property type="chains" value="A/C=1-838"/>
</dbReference>
<dbReference type="PDB" id="6MMM">
    <property type="method" value="EM"/>
    <property type="resolution" value="6.84 A"/>
    <property type="chains" value="A/C=1-838"/>
</dbReference>
<dbReference type="PDB" id="6MMN">
    <property type="method" value="EM"/>
    <property type="resolution" value="7.51 A"/>
    <property type="chains" value="A/C=1-838"/>
</dbReference>
<dbReference type="PDB" id="6MMP">
    <property type="method" value="EM"/>
    <property type="resolution" value="6.88 A"/>
    <property type="chains" value="A/C=1-838"/>
</dbReference>
<dbReference type="PDB" id="6MMR">
    <property type="method" value="EM"/>
    <property type="resolution" value="5.13 A"/>
    <property type="chains" value="A/C=1-838"/>
</dbReference>
<dbReference type="PDB" id="6MMS">
    <property type="method" value="EM"/>
    <property type="resolution" value="5.38 A"/>
    <property type="chains" value="A/C=1-838"/>
</dbReference>
<dbReference type="PDB" id="6MMT">
    <property type="method" value="EM"/>
    <property type="resolution" value="7.46 A"/>
    <property type="chains" value="A/C=1-838"/>
</dbReference>
<dbReference type="PDB" id="6MMU">
    <property type="method" value="EM"/>
    <property type="resolution" value="5.30 A"/>
    <property type="chains" value="A/C=1-838"/>
</dbReference>
<dbReference type="PDB" id="6MMV">
    <property type="method" value="EM"/>
    <property type="resolution" value="4.71 A"/>
    <property type="chains" value="A/C=1-797"/>
</dbReference>
<dbReference type="PDB" id="6MMW">
    <property type="method" value="EM"/>
    <property type="resolution" value="6.20 A"/>
    <property type="chains" value="A/C=1-838"/>
</dbReference>
<dbReference type="PDB" id="6MMX">
    <property type="method" value="EM"/>
    <property type="resolution" value="6.99 A"/>
    <property type="chains" value="A/C=1-838"/>
</dbReference>
<dbReference type="PDB" id="6OVD">
    <property type="method" value="X-ray"/>
    <property type="resolution" value="2.10 A"/>
    <property type="chains" value="A=394-544, A=663-800"/>
</dbReference>
<dbReference type="PDB" id="6OVE">
    <property type="method" value="X-ray"/>
    <property type="resolution" value="2.00 A"/>
    <property type="chains" value="A=394-544, A=663-800"/>
</dbReference>
<dbReference type="PDB" id="6USU">
    <property type="method" value="X-ray"/>
    <property type="resolution" value="2.09 A"/>
    <property type="chains" value="A=394-544, A=663-800"/>
</dbReference>
<dbReference type="PDB" id="6USV">
    <property type="method" value="X-ray"/>
    <property type="resolution" value="2.30 A"/>
    <property type="chains" value="A=394-544, A=663-800"/>
</dbReference>
<dbReference type="PDB" id="6UZ6">
    <property type="method" value="X-ray"/>
    <property type="resolution" value="1.66 A"/>
    <property type="chains" value="A=394-544, A=663-800"/>
</dbReference>
<dbReference type="PDB" id="6UZG">
    <property type="method" value="X-ray"/>
    <property type="resolution" value="1.94 A"/>
    <property type="chains" value="A=394-544, A=663-800"/>
</dbReference>
<dbReference type="PDB" id="6UZR">
    <property type="method" value="X-ray"/>
    <property type="resolution" value="1.87 A"/>
    <property type="chains" value="A=394-544, A=663-800"/>
</dbReference>
<dbReference type="PDB" id="6UZW">
    <property type="method" value="X-ray"/>
    <property type="resolution" value="2.13 A"/>
    <property type="chains" value="A=394-544, A=663-800"/>
</dbReference>
<dbReference type="PDB" id="6UZX">
    <property type="method" value="X-ray"/>
    <property type="resolution" value="2.41 A"/>
    <property type="chains" value="A=394-544, A=663-800"/>
</dbReference>
<dbReference type="PDB" id="6WHR">
    <property type="method" value="EM"/>
    <property type="resolution" value="3.99 A"/>
    <property type="chains" value="A/C=1-938"/>
</dbReference>
<dbReference type="PDB" id="6WHS">
    <property type="method" value="EM"/>
    <property type="resolution" value="4.00 A"/>
    <property type="chains" value="A/C=1-938"/>
</dbReference>
<dbReference type="PDB" id="6WHT">
    <property type="method" value="EM"/>
    <property type="resolution" value="4.39 A"/>
    <property type="chains" value="A/C=1-938"/>
</dbReference>
<dbReference type="PDB" id="6WHU">
    <property type="method" value="EM"/>
    <property type="resolution" value="3.93 A"/>
    <property type="chains" value="A/C=1-938"/>
</dbReference>
<dbReference type="PDB" id="6WHV">
    <property type="method" value="EM"/>
    <property type="resolution" value="4.05 A"/>
    <property type="chains" value="A/C=1-938"/>
</dbReference>
<dbReference type="PDB" id="6WHW">
    <property type="method" value="EM"/>
    <property type="resolution" value="4.09 A"/>
    <property type="chains" value="A/C=1-938"/>
</dbReference>
<dbReference type="PDB" id="6WHX">
    <property type="method" value="EM"/>
    <property type="resolution" value="4.09 A"/>
    <property type="chains" value="A/C=1-938"/>
</dbReference>
<dbReference type="PDB" id="6WHY">
    <property type="method" value="EM"/>
    <property type="resolution" value="4.03 A"/>
    <property type="chains" value="A/C=1-938"/>
</dbReference>
<dbReference type="PDB" id="6WI0">
    <property type="method" value="EM"/>
    <property type="resolution" value="4.27 A"/>
    <property type="chains" value="A/C=1-938"/>
</dbReference>
<dbReference type="PDB" id="6WI1">
    <property type="method" value="EM"/>
    <property type="resolution" value="3.62 A"/>
    <property type="chains" value="A/C=1-847"/>
</dbReference>
<dbReference type="PDB" id="7SAA">
    <property type="method" value="EM"/>
    <property type="resolution" value="2.97 A"/>
    <property type="chains" value="A/C=1-847"/>
</dbReference>
<dbReference type="PDB" id="7SAB">
    <property type="method" value="EM"/>
    <property type="resolution" value="4.30 A"/>
    <property type="chains" value="A/C=1-847"/>
</dbReference>
<dbReference type="PDB" id="7SAC">
    <property type="method" value="EM"/>
    <property type="resolution" value="3.69 A"/>
    <property type="chains" value="A/C=1-847"/>
</dbReference>
<dbReference type="PDB" id="7SAD">
    <property type="method" value="EM"/>
    <property type="resolution" value="3.96 A"/>
    <property type="chains" value="A/C=1-847"/>
</dbReference>
<dbReference type="PDB" id="7TE9">
    <property type="method" value="EM"/>
    <property type="resolution" value="3.92 A"/>
    <property type="chains" value="A/C=1-838"/>
</dbReference>
<dbReference type="PDB" id="7TEB">
    <property type="method" value="EM"/>
    <property type="resolution" value="4.23 A"/>
    <property type="chains" value="A/C=1-838"/>
</dbReference>
<dbReference type="PDB" id="7TEE">
    <property type="method" value="EM"/>
    <property type="resolution" value="6.59 A"/>
    <property type="chains" value="A/C=1-838"/>
</dbReference>
<dbReference type="PDB" id="7TEQ">
    <property type="method" value="EM"/>
    <property type="resolution" value="7.51 A"/>
    <property type="chains" value="A/C=1-838"/>
</dbReference>
<dbReference type="PDB" id="7TER">
    <property type="method" value="EM"/>
    <property type="resolution" value="5.23 A"/>
    <property type="chains" value="A/C=1-838"/>
</dbReference>
<dbReference type="PDB" id="7TES">
    <property type="method" value="EM"/>
    <property type="resolution" value="4.70 A"/>
    <property type="chains" value="A/C=1-838"/>
</dbReference>
<dbReference type="PDB" id="7TET">
    <property type="method" value="EM"/>
    <property type="resolution" value="4.45 A"/>
    <property type="chains" value="A/C=1-838"/>
</dbReference>
<dbReference type="PDB" id="7YFG">
    <property type="method" value="EM"/>
    <property type="resolution" value="3.60 A"/>
    <property type="chains" value="A/C=1-847"/>
</dbReference>
<dbReference type="PDB" id="7YFH">
    <property type="method" value="EM"/>
    <property type="resolution" value="3.00 A"/>
    <property type="chains" value="A/C=1-847"/>
</dbReference>
<dbReference type="PDB" id="7YFI">
    <property type="method" value="EM"/>
    <property type="resolution" value="3.30 A"/>
    <property type="chains" value="A/C=1-798"/>
</dbReference>
<dbReference type="PDB" id="8HDK">
    <property type="method" value="EM"/>
    <property type="resolution" value="4.30 A"/>
    <property type="chains" value="A/C=1-796"/>
</dbReference>
<dbReference type="PDB" id="8JF7">
    <property type="method" value="EM"/>
    <property type="resolution" value="7.73 A"/>
    <property type="chains" value="A/C=1-847"/>
</dbReference>
<dbReference type="PDB" id="8USW">
    <property type="method" value="EM"/>
    <property type="resolution" value="4.23 A"/>
    <property type="chains" value="A/C=1-847"/>
</dbReference>
<dbReference type="PDB" id="8VUY">
    <property type="method" value="EM"/>
    <property type="resolution" value="3.81 A"/>
    <property type="chains" value="A/C=25-838"/>
</dbReference>
<dbReference type="PDB" id="8VVH">
    <property type="method" value="EM"/>
    <property type="resolution" value="3.95 A"/>
    <property type="chains" value="A=25-393"/>
</dbReference>
<dbReference type="PDB" id="8XLK">
    <property type="method" value="EM"/>
    <property type="resolution" value="4.20 A"/>
    <property type="chains" value="A/C=1-938"/>
</dbReference>
<dbReference type="PDB" id="9ARE">
    <property type="method" value="EM"/>
    <property type="resolution" value="3.72 A"/>
    <property type="chains" value="A/C=1-847"/>
</dbReference>
<dbReference type="PDB" id="9ARF">
    <property type="method" value="EM"/>
    <property type="resolution" value="3.13 A"/>
    <property type="chains" value="A/C=1-847"/>
</dbReference>
<dbReference type="PDB" id="9ARG">
    <property type="method" value="EM"/>
    <property type="resolution" value="4.05 A"/>
    <property type="chains" value="A/C=1-847"/>
</dbReference>
<dbReference type="PDB" id="9ARH">
    <property type="method" value="EM"/>
    <property type="resolution" value="3.69 A"/>
    <property type="chains" value="A/C=1-938"/>
</dbReference>
<dbReference type="PDB" id="9ARI">
    <property type="method" value="EM"/>
    <property type="resolution" value="3.90 A"/>
    <property type="chains" value="A/C=1-938"/>
</dbReference>
<dbReference type="PDB" id="9BIB">
    <property type="method" value="EM"/>
    <property type="resolution" value="3.81 A"/>
    <property type="chains" value="A/C=1-847"/>
</dbReference>
<dbReference type="PDB" id="9JNN">
    <property type="method" value="EM"/>
    <property type="resolution" value="5.40 A"/>
    <property type="chains" value="A/C=25-841"/>
</dbReference>
<dbReference type="PDBsum" id="1PB7"/>
<dbReference type="PDBsum" id="1PB8"/>
<dbReference type="PDBsum" id="1PB9"/>
<dbReference type="PDBsum" id="1PBQ"/>
<dbReference type="PDBsum" id="1Y1M"/>
<dbReference type="PDBsum" id="1Y1Z"/>
<dbReference type="PDBsum" id="1Y20"/>
<dbReference type="PDBsum" id="2A5T"/>
<dbReference type="PDBsum" id="3Q41"/>
<dbReference type="PDBsum" id="4KCC"/>
<dbReference type="PDBsum" id="4KFQ"/>
<dbReference type="PDBsum" id="4NF4"/>
<dbReference type="PDBsum" id="4NF5"/>
<dbReference type="PDBsum" id="4NF6"/>
<dbReference type="PDBsum" id="4NF8"/>
<dbReference type="PDBsum" id="4PE5"/>
<dbReference type="PDBsum" id="5DEX"/>
<dbReference type="PDBsum" id="5FXG"/>
<dbReference type="PDBsum" id="5FXH"/>
<dbReference type="PDBsum" id="5FXI"/>
<dbReference type="PDBsum" id="5FXJ"/>
<dbReference type="PDBsum" id="5FXK"/>
<dbReference type="PDBsum" id="5I56"/>
<dbReference type="PDBsum" id="5I57"/>
<dbReference type="PDBsum" id="5I58"/>
<dbReference type="PDBsum" id="5I59"/>
<dbReference type="PDBsum" id="5JTY"/>
<dbReference type="PDBsum" id="5U8C"/>
<dbReference type="PDBsum" id="5VIH"/>
<dbReference type="PDBsum" id="5VII"/>
<dbReference type="PDBsum" id="5VIJ"/>
<dbReference type="PDBsum" id="6CNA"/>
<dbReference type="PDBsum" id="6MM9"/>
<dbReference type="PDBsum" id="6MMA"/>
<dbReference type="PDBsum" id="6MMB"/>
<dbReference type="PDBsum" id="6MMG"/>
<dbReference type="PDBsum" id="6MMH"/>
<dbReference type="PDBsum" id="6MMI"/>
<dbReference type="PDBsum" id="6MMJ"/>
<dbReference type="PDBsum" id="6MMK"/>
<dbReference type="PDBsum" id="6MML"/>
<dbReference type="PDBsum" id="6MMM"/>
<dbReference type="PDBsum" id="6MMN"/>
<dbReference type="PDBsum" id="6MMP"/>
<dbReference type="PDBsum" id="6MMR"/>
<dbReference type="PDBsum" id="6MMS"/>
<dbReference type="PDBsum" id="6MMT"/>
<dbReference type="PDBsum" id="6MMU"/>
<dbReference type="PDBsum" id="6MMV"/>
<dbReference type="PDBsum" id="6MMW"/>
<dbReference type="PDBsum" id="6MMX"/>
<dbReference type="PDBsum" id="6OVD"/>
<dbReference type="PDBsum" id="6OVE"/>
<dbReference type="PDBsum" id="6USU"/>
<dbReference type="PDBsum" id="6USV"/>
<dbReference type="PDBsum" id="6UZ6"/>
<dbReference type="PDBsum" id="6UZG"/>
<dbReference type="PDBsum" id="6UZR"/>
<dbReference type="PDBsum" id="6UZW"/>
<dbReference type="PDBsum" id="6UZX"/>
<dbReference type="PDBsum" id="6WHR"/>
<dbReference type="PDBsum" id="6WHS"/>
<dbReference type="PDBsum" id="6WHT"/>
<dbReference type="PDBsum" id="6WHU"/>
<dbReference type="PDBsum" id="6WHV"/>
<dbReference type="PDBsum" id="6WHW"/>
<dbReference type="PDBsum" id="6WHX"/>
<dbReference type="PDBsum" id="6WHY"/>
<dbReference type="PDBsum" id="6WI0"/>
<dbReference type="PDBsum" id="6WI1"/>
<dbReference type="PDBsum" id="7SAA"/>
<dbReference type="PDBsum" id="7SAB"/>
<dbReference type="PDBsum" id="7SAC"/>
<dbReference type="PDBsum" id="7SAD"/>
<dbReference type="PDBsum" id="7TE9"/>
<dbReference type="PDBsum" id="7TEB"/>
<dbReference type="PDBsum" id="7TEE"/>
<dbReference type="PDBsum" id="7TEQ"/>
<dbReference type="PDBsum" id="7TER"/>
<dbReference type="PDBsum" id="7TES"/>
<dbReference type="PDBsum" id="7TET"/>
<dbReference type="PDBsum" id="7YFG"/>
<dbReference type="PDBsum" id="7YFH"/>
<dbReference type="PDBsum" id="7YFI"/>
<dbReference type="PDBsum" id="8HDK"/>
<dbReference type="PDBsum" id="8JF7"/>
<dbReference type="PDBsum" id="8USW"/>
<dbReference type="PDBsum" id="8VUY"/>
<dbReference type="PDBsum" id="8VVH"/>
<dbReference type="PDBsum" id="8XLK"/>
<dbReference type="PDBsum" id="9ARE"/>
<dbReference type="PDBsum" id="9ARF"/>
<dbReference type="PDBsum" id="9ARG"/>
<dbReference type="PDBsum" id="9ARH"/>
<dbReference type="PDBsum" id="9ARI"/>
<dbReference type="PDBsum" id="9BIB"/>
<dbReference type="PDBsum" id="9JNN"/>
<dbReference type="EMDB" id="EMD-21673"/>
<dbReference type="EMDB" id="EMD-21674"/>
<dbReference type="EMDB" id="EMD-21675"/>
<dbReference type="EMDB" id="EMD-21676"/>
<dbReference type="EMDB" id="EMD-21677"/>
<dbReference type="EMDB" id="EMD-21678"/>
<dbReference type="EMDB" id="EMD-21679"/>
<dbReference type="EMDB" id="EMD-21680"/>
<dbReference type="EMDB" id="EMD-21681"/>
<dbReference type="EMDB" id="EMD-21682"/>
<dbReference type="EMDB" id="EMD-24946"/>
<dbReference type="EMDB" id="EMD-24947"/>
<dbReference type="EMDB" id="EMD-24948"/>
<dbReference type="EMDB" id="EMD-24949"/>
<dbReference type="EMDB" id="EMD-25843"/>
<dbReference type="EMDB" id="EMD-25844"/>
<dbReference type="EMDB" id="EMD-25845"/>
<dbReference type="EMDB" id="EMD-25849"/>
<dbReference type="EMDB" id="EMD-25850"/>
<dbReference type="EMDB" id="EMD-25851"/>
<dbReference type="EMDB" id="EMD-25852"/>
<dbReference type="EMDB" id="EMD-3352"/>
<dbReference type="EMDB" id="EMD-3353"/>
<dbReference type="EMDB" id="EMD-3354"/>
<dbReference type="EMDB" id="EMD-3355"/>
<dbReference type="EMDB" id="EMD-3356"/>
<dbReference type="EMDB" id="EMD-33789"/>
<dbReference type="EMDB" id="EMD-33790"/>
<dbReference type="EMDB" id="EMD-33791"/>
<dbReference type="EMDB" id="EMD-34674"/>
<dbReference type="EMDB" id="EMD-36209"/>
<dbReference type="EMDB" id="EMD-38451"/>
<dbReference type="EMDB" id="EMD-42520"/>
<dbReference type="EMDB" id="EMD-43544"/>
<dbReference type="EMDB" id="EMD-43559"/>
<dbReference type="EMDB" id="EMD-43779"/>
<dbReference type="EMDB" id="EMD-43780"/>
<dbReference type="EMDB" id="EMD-43781"/>
<dbReference type="EMDB" id="EMD-43782"/>
<dbReference type="EMDB" id="EMD-43783"/>
<dbReference type="EMDB" id="EMD-44586"/>
<dbReference type="EMDB" id="EMD-61622"/>
<dbReference type="EMDB" id="EMD-7529"/>
<dbReference type="EMDB" id="EMD-9147"/>
<dbReference type="EMDB" id="EMD-9148"/>
<dbReference type="EMDB" id="EMD-9149"/>
<dbReference type="EMDB" id="EMD-9150"/>
<dbReference type="EMDB" id="EMD-9151"/>
<dbReference type="EMDB" id="EMD-9152"/>
<dbReference type="EMDB" id="EMD-9153"/>
<dbReference type="EMDB" id="EMD-9154"/>
<dbReference type="EMDB" id="EMD-9155"/>
<dbReference type="EMDB" id="EMD-9156"/>
<dbReference type="EMDB" id="EMD-9157"/>
<dbReference type="EMDB" id="EMD-9158"/>
<dbReference type="EMDB" id="EMD-9159"/>
<dbReference type="EMDB" id="EMD-9160"/>
<dbReference type="EMDB" id="EMD-9161"/>
<dbReference type="EMDB" id="EMD-9162"/>
<dbReference type="EMDB" id="EMD-9163"/>
<dbReference type="EMDB" id="EMD-9164"/>
<dbReference type="EMDB" id="EMD-9165"/>
<dbReference type="SMR" id="P35439"/>
<dbReference type="BioGRID" id="246573">
    <property type="interactions" value="24"/>
</dbReference>
<dbReference type="ComplexPortal" id="CPX-283">
    <property type="entry name" value="NMDA receptor complex, GluN1-GluN2A"/>
</dbReference>
<dbReference type="ComplexPortal" id="CPX-284">
    <property type="entry name" value="NMDA receptor complex, GluN1-GluN2B"/>
</dbReference>
<dbReference type="ComplexPortal" id="CPX-287">
    <property type="entry name" value="NMDA receptor complex, GluN1-GluN2C"/>
</dbReference>
<dbReference type="ComplexPortal" id="CPX-288">
    <property type="entry name" value="NMDA receptor complex, GluN1-GluN2D"/>
</dbReference>
<dbReference type="ComplexPortal" id="CPX-295">
    <property type="entry name" value="NMDA receptor complex, GluN1-GluN2A-GluN2B"/>
</dbReference>
<dbReference type="CORUM" id="P35439"/>
<dbReference type="DIP" id="DIP-674N"/>
<dbReference type="FunCoup" id="P35439">
    <property type="interactions" value="1897"/>
</dbReference>
<dbReference type="IntAct" id="P35439">
    <property type="interactions" value="19"/>
</dbReference>
<dbReference type="MINT" id="P35439"/>
<dbReference type="STRING" id="10116.ENSRNOP00000029227"/>
<dbReference type="BindingDB" id="P35439"/>
<dbReference type="ChEMBL" id="CHEMBL330"/>
<dbReference type="DrugCentral" id="P35439"/>
<dbReference type="GuidetoPHARMACOLOGY" id="455"/>
<dbReference type="TCDB" id="1.A.10.1.6">
    <property type="family name" value="the glutamate-gated ion channel (gic) family of neurotransmitter receptors"/>
</dbReference>
<dbReference type="GlyCosmos" id="P35439">
    <property type="glycosylation" value="12 sites, 12 glycans"/>
</dbReference>
<dbReference type="GlyGen" id="P35439">
    <property type="glycosylation" value="12 sites, 12 N-linked glycans (5 sites)"/>
</dbReference>
<dbReference type="iPTMnet" id="P35439"/>
<dbReference type="PhosphoSitePlus" id="P35439"/>
<dbReference type="PaxDb" id="10116-ENSRNOP00000029227"/>
<dbReference type="ABCD" id="P35439">
    <property type="antibodies" value="9 sequenced antibodies"/>
</dbReference>
<dbReference type="Ensembl" id="ENSRNOT00000037725.6">
    <molecule id="P35439-2"/>
    <property type="protein sequence ID" value="ENSRNOP00000029227.5"/>
    <property type="gene ID" value="ENSRNOG00000011726.8"/>
</dbReference>
<dbReference type="Ensembl" id="ENSRNOT00000044246.5">
    <molecule id="P35439-6"/>
    <property type="protein sequence ID" value="ENSRNOP00000043301.3"/>
    <property type="gene ID" value="ENSRNOG00000011726.8"/>
</dbReference>
<dbReference type="Ensembl" id="ENSRNOT00000049297.4">
    <molecule id="P35439-1"/>
    <property type="protein sequence ID" value="ENSRNOP00000049198.1"/>
    <property type="gene ID" value="ENSRNOG00000011726.8"/>
</dbReference>
<dbReference type="GeneID" id="24408"/>
<dbReference type="KEGG" id="rno:24408"/>
<dbReference type="UCSC" id="RGD:2736">
    <molecule id="P35439-1"/>
    <property type="organism name" value="rat"/>
</dbReference>
<dbReference type="AGR" id="RGD:2736"/>
<dbReference type="CTD" id="2902"/>
<dbReference type="RGD" id="2736">
    <property type="gene designation" value="Grin1"/>
</dbReference>
<dbReference type="eggNOG" id="KOG4440">
    <property type="taxonomic scope" value="Eukaryota"/>
</dbReference>
<dbReference type="GeneTree" id="ENSGT00940000158016"/>
<dbReference type="HOGENOM" id="CLU_007257_2_0_1"/>
<dbReference type="InParanoid" id="P35439"/>
<dbReference type="OMA" id="FANNTPD"/>
<dbReference type="OrthoDB" id="5984008at2759"/>
<dbReference type="PhylomeDB" id="P35439"/>
<dbReference type="TreeFam" id="TF351405"/>
<dbReference type="Reactome" id="R-RNO-3928662">
    <property type="pathway name" value="EPHB-mediated forward signaling"/>
</dbReference>
<dbReference type="Reactome" id="R-RNO-438066">
    <property type="pathway name" value="Unblocking of NMDA receptors, glutamate binding and activation"/>
</dbReference>
<dbReference type="Reactome" id="R-RNO-5673001">
    <property type="pathway name" value="RAF/MAP kinase cascade"/>
</dbReference>
<dbReference type="Reactome" id="R-RNO-8849932">
    <property type="pathway name" value="Synaptic adhesion-like molecules"/>
</dbReference>
<dbReference type="Reactome" id="R-RNO-9609736">
    <property type="pathway name" value="Assembly and cell surface presentation of NMDA receptors"/>
</dbReference>
<dbReference type="EvolutionaryTrace" id="P35439"/>
<dbReference type="PRO" id="PR:P35439"/>
<dbReference type="Proteomes" id="UP000002494">
    <property type="component" value="Chromosome 3"/>
</dbReference>
<dbReference type="Bgee" id="ENSRNOG00000011726">
    <property type="expression patterns" value="Expressed in frontal cortex and 9 other cell types or tissues"/>
</dbReference>
<dbReference type="ExpressionAtlas" id="P35439">
    <property type="expression patterns" value="baseline and differential"/>
</dbReference>
<dbReference type="GO" id="GO:0009986">
    <property type="term" value="C:cell surface"/>
    <property type="evidence" value="ECO:0000314"/>
    <property type="project" value="ARUK-UCL"/>
</dbReference>
<dbReference type="GO" id="GO:0005737">
    <property type="term" value="C:cytoplasm"/>
    <property type="evidence" value="ECO:0000314"/>
    <property type="project" value="ARUK-UCL"/>
</dbReference>
<dbReference type="GO" id="GO:0030425">
    <property type="term" value="C:dendrite"/>
    <property type="evidence" value="ECO:0000266"/>
    <property type="project" value="RGD"/>
</dbReference>
<dbReference type="GO" id="GO:0032590">
    <property type="term" value="C:dendrite membrane"/>
    <property type="evidence" value="ECO:0000314"/>
    <property type="project" value="BHF-UCL"/>
</dbReference>
<dbReference type="GO" id="GO:0044307">
    <property type="term" value="C:dendritic branch"/>
    <property type="evidence" value="ECO:0000314"/>
    <property type="project" value="RGD"/>
</dbReference>
<dbReference type="GO" id="GO:0043197">
    <property type="term" value="C:dendritic spine"/>
    <property type="evidence" value="ECO:0000314"/>
    <property type="project" value="RGD"/>
</dbReference>
<dbReference type="GO" id="GO:0005783">
    <property type="term" value="C:endoplasmic reticulum"/>
    <property type="evidence" value="ECO:0000266"/>
    <property type="project" value="RGD"/>
</dbReference>
<dbReference type="GO" id="GO:0005789">
    <property type="term" value="C:endoplasmic reticulum membrane"/>
    <property type="evidence" value="ECO:0000304"/>
    <property type="project" value="Reactome"/>
</dbReference>
<dbReference type="GO" id="GO:0060076">
    <property type="term" value="C:excitatory synapse"/>
    <property type="evidence" value="ECO:0000314"/>
    <property type="project" value="BHF-UCL"/>
</dbReference>
<dbReference type="GO" id="GO:0098978">
    <property type="term" value="C:glutamatergic synapse"/>
    <property type="evidence" value="ECO:0000314"/>
    <property type="project" value="SynGO"/>
</dbReference>
<dbReference type="GO" id="GO:0098686">
    <property type="term" value="C:hippocampal mossy fiber to CA3 synapse"/>
    <property type="evidence" value="ECO:0000314"/>
    <property type="project" value="SynGO"/>
</dbReference>
<dbReference type="GO" id="GO:0016020">
    <property type="term" value="C:membrane"/>
    <property type="evidence" value="ECO:0000266"/>
    <property type="project" value="RGD"/>
</dbReference>
<dbReference type="GO" id="GO:0034702">
    <property type="term" value="C:monoatomic ion channel complex"/>
    <property type="evidence" value="ECO:0000266"/>
    <property type="project" value="RGD"/>
</dbReference>
<dbReference type="GO" id="GO:0043005">
    <property type="term" value="C:neuron projection"/>
    <property type="evidence" value="ECO:0000318"/>
    <property type="project" value="GO_Central"/>
</dbReference>
<dbReference type="GO" id="GO:0043025">
    <property type="term" value="C:neuronal cell body"/>
    <property type="evidence" value="ECO:0000314"/>
    <property type="project" value="RGD"/>
</dbReference>
<dbReference type="GO" id="GO:0098878">
    <property type="term" value="C:neurotransmitter receptor complex"/>
    <property type="evidence" value="ECO:0000266"/>
    <property type="project" value="RGD"/>
</dbReference>
<dbReference type="GO" id="GO:0017146">
    <property type="term" value="C:NMDA selective glutamate receptor complex"/>
    <property type="evidence" value="ECO:0000314"/>
    <property type="project" value="UniProtKB"/>
</dbReference>
<dbReference type="GO" id="GO:0098688">
    <property type="term" value="C:parallel fiber to Purkinje cell synapse"/>
    <property type="evidence" value="ECO:0000314"/>
    <property type="project" value="SynGO"/>
</dbReference>
<dbReference type="GO" id="GO:0005886">
    <property type="term" value="C:plasma membrane"/>
    <property type="evidence" value="ECO:0000314"/>
    <property type="project" value="UniProtKB"/>
</dbReference>
<dbReference type="GO" id="GO:0014069">
    <property type="term" value="C:postsynaptic density"/>
    <property type="evidence" value="ECO:0000266"/>
    <property type="project" value="RGD"/>
</dbReference>
<dbReference type="GO" id="GO:0098839">
    <property type="term" value="C:postsynaptic density membrane"/>
    <property type="evidence" value="ECO:0000314"/>
    <property type="project" value="UniProtKB"/>
</dbReference>
<dbReference type="GO" id="GO:0045211">
    <property type="term" value="C:postsynaptic membrane"/>
    <property type="evidence" value="ECO:0000314"/>
    <property type="project" value="UniProtKB"/>
</dbReference>
<dbReference type="GO" id="GO:0048787">
    <property type="term" value="C:presynaptic active zone membrane"/>
    <property type="evidence" value="ECO:0000314"/>
    <property type="project" value="SynGO"/>
</dbReference>
<dbReference type="GO" id="GO:0042734">
    <property type="term" value="C:presynaptic membrane"/>
    <property type="evidence" value="ECO:0000314"/>
    <property type="project" value="UniProtKB"/>
</dbReference>
<dbReference type="GO" id="GO:0045202">
    <property type="term" value="C:synapse"/>
    <property type="evidence" value="ECO:0000314"/>
    <property type="project" value="MGI"/>
</dbReference>
<dbReference type="GO" id="GO:0043083">
    <property type="term" value="C:synaptic cleft"/>
    <property type="evidence" value="ECO:0000314"/>
    <property type="project" value="RGD"/>
</dbReference>
<dbReference type="GO" id="GO:0097060">
    <property type="term" value="C:synaptic membrane"/>
    <property type="evidence" value="ECO:0000314"/>
    <property type="project" value="RGD"/>
</dbReference>
<dbReference type="GO" id="GO:0008021">
    <property type="term" value="C:synaptic vesicle"/>
    <property type="evidence" value="ECO:0000266"/>
    <property type="project" value="RGD"/>
</dbReference>
<dbReference type="GO" id="GO:0030672">
    <property type="term" value="C:synaptic vesicle membrane"/>
    <property type="evidence" value="ECO:0000266"/>
    <property type="project" value="RGD"/>
</dbReference>
<dbReference type="GO" id="GO:0043195">
    <property type="term" value="C:terminal bouton"/>
    <property type="evidence" value="ECO:0000314"/>
    <property type="project" value="RGD"/>
</dbReference>
<dbReference type="GO" id="GO:0001540">
    <property type="term" value="F:amyloid-beta binding"/>
    <property type="evidence" value="ECO:0000314"/>
    <property type="project" value="ARUK-UCL"/>
</dbReference>
<dbReference type="GO" id="GO:0005262">
    <property type="term" value="F:calcium channel activity"/>
    <property type="evidence" value="ECO:0000266"/>
    <property type="project" value="RGD"/>
</dbReference>
<dbReference type="GO" id="GO:0005509">
    <property type="term" value="F:calcium ion binding"/>
    <property type="evidence" value="ECO:0000266"/>
    <property type="project" value="RGD"/>
</dbReference>
<dbReference type="GO" id="GO:0005516">
    <property type="term" value="F:calmodulin binding"/>
    <property type="evidence" value="ECO:0000266"/>
    <property type="project" value="RGD"/>
</dbReference>
<dbReference type="GO" id="GO:0019899">
    <property type="term" value="F:enzyme binding"/>
    <property type="evidence" value="ECO:0000353"/>
    <property type="project" value="RGD"/>
</dbReference>
<dbReference type="GO" id="GO:0016595">
    <property type="term" value="F:glutamate binding"/>
    <property type="evidence" value="ECO:0000314"/>
    <property type="project" value="UniProtKB"/>
</dbReference>
<dbReference type="GO" id="GO:0035254">
    <property type="term" value="F:glutamate receptor binding"/>
    <property type="evidence" value="ECO:0000353"/>
    <property type="project" value="ARUK-UCL"/>
</dbReference>
<dbReference type="GO" id="GO:0022849">
    <property type="term" value="F:glutamate-gated calcium ion channel activity"/>
    <property type="evidence" value="ECO:0000250"/>
    <property type="project" value="UniProtKB"/>
</dbReference>
<dbReference type="GO" id="GO:0004970">
    <property type="term" value="F:glutamate-gated receptor activity"/>
    <property type="evidence" value="ECO:0000314"/>
    <property type="project" value="RGD"/>
</dbReference>
<dbReference type="GO" id="GO:0016594">
    <property type="term" value="F:glycine binding"/>
    <property type="evidence" value="ECO:0000314"/>
    <property type="project" value="UniProtKB"/>
</dbReference>
<dbReference type="GO" id="GO:0099507">
    <property type="term" value="F:ligand-gated monoatomic ion channel activity involved in regulation of presynaptic membrane potential"/>
    <property type="evidence" value="ECO:0000314"/>
    <property type="project" value="SynGO"/>
</dbReference>
<dbReference type="GO" id="GO:0015280">
    <property type="term" value="F:ligand-gated sodium channel activity"/>
    <property type="evidence" value="ECO:0000250"/>
    <property type="project" value="UniProtKB"/>
</dbReference>
<dbReference type="GO" id="GO:0005261">
    <property type="term" value="F:monoatomic cation channel activity"/>
    <property type="evidence" value="ECO:0000266"/>
    <property type="project" value="RGD"/>
</dbReference>
<dbReference type="GO" id="GO:0004972">
    <property type="term" value="F:NMDA glutamate receptor activity"/>
    <property type="evidence" value="ECO:0000314"/>
    <property type="project" value="UniProtKB"/>
</dbReference>
<dbReference type="GO" id="GO:0019902">
    <property type="term" value="F:phosphatase binding"/>
    <property type="evidence" value="ECO:0000314"/>
    <property type="project" value="RGD"/>
</dbReference>
<dbReference type="GO" id="GO:0044877">
    <property type="term" value="F:protein-containing complex binding"/>
    <property type="evidence" value="ECO:0000314"/>
    <property type="project" value="RGD"/>
</dbReference>
<dbReference type="GO" id="GO:0038023">
    <property type="term" value="F:signaling receptor activity"/>
    <property type="evidence" value="ECO:0000318"/>
    <property type="project" value="GO_Central"/>
</dbReference>
<dbReference type="GO" id="GO:0005102">
    <property type="term" value="F:signaling receptor binding"/>
    <property type="evidence" value="ECO:0000353"/>
    <property type="project" value="RGD"/>
</dbReference>
<dbReference type="GO" id="GO:0022824">
    <property type="term" value="F:transmitter-gated monoatomic ion channel activity"/>
    <property type="evidence" value="ECO:0000314"/>
    <property type="project" value="UniProtKB"/>
</dbReference>
<dbReference type="GO" id="GO:1904315">
    <property type="term" value="F:transmitter-gated monoatomic ion channel activity involved in regulation of postsynaptic membrane potential"/>
    <property type="evidence" value="ECO:0000314"/>
    <property type="project" value="SynGO"/>
</dbReference>
<dbReference type="GO" id="GO:0022843">
    <property type="term" value="F:voltage-gated monoatomic cation channel activity"/>
    <property type="evidence" value="ECO:0000315"/>
    <property type="project" value="RGD"/>
</dbReference>
<dbReference type="GO" id="GO:0008344">
    <property type="term" value="P:adult locomotory behavior"/>
    <property type="evidence" value="ECO:0000266"/>
    <property type="project" value="RGD"/>
</dbReference>
<dbReference type="GO" id="GO:0008306">
    <property type="term" value="P:associative learning"/>
    <property type="evidence" value="ECO:0000266"/>
    <property type="project" value="RGD"/>
</dbReference>
<dbReference type="GO" id="GO:0055074">
    <property type="term" value="P:calcium ion homeostasis"/>
    <property type="evidence" value="ECO:0000266"/>
    <property type="project" value="RGD"/>
</dbReference>
<dbReference type="GO" id="GO:0097553">
    <property type="term" value="P:calcium ion transmembrane import into cytosol"/>
    <property type="evidence" value="ECO:0000266"/>
    <property type="project" value="RGD"/>
</dbReference>
<dbReference type="GO" id="GO:0070588">
    <property type="term" value="P:calcium ion transmembrane transport"/>
    <property type="evidence" value="ECO:0000314"/>
    <property type="project" value="UniProtKB"/>
</dbReference>
<dbReference type="GO" id="GO:0006816">
    <property type="term" value="P:calcium ion transport"/>
    <property type="evidence" value="ECO:0000266"/>
    <property type="project" value="RGD"/>
</dbReference>
<dbReference type="GO" id="GO:1905430">
    <property type="term" value="P:cellular response to glycine"/>
    <property type="evidence" value="ECO:0000270"/>
    <property type="project" value="RGD"/>
</dbReference>
<dbReference type="GO" id="GO:0071287">
    <property type="term" value="P:cellular response to manganese ion"/>
    <property type="evidence" value="ECO:0000270"/>
    <property type="project" value="RGD"/>
</dbReference>
<dbReference type="GO" id="GO:0021987">
    <property type="term" value="P:cerebral cortex development"/>
    <property type="evidence" value="ECO:0000266"/>
    <property type="project" value="RGD"/>
</dbReference>
<dbReference type="GO" id="GO:0007268">
    <property type="term" value="P:chemical synaptic transmission"/>
    <property type="evidence" value="ECO:0000318"/>
    <property type="project" value="GO_Central"/>
</dbReference>
<dbReference type="GO" id="GO:0001661">
    <property type="term" value="P:conditioned taste aversion"/>
    <property type="evidence" value="ECO:0000266"/>
    <property type="project" value="RGD"/>
</dbReference>
<dbReference type="GO" id="GO:0060079">
    <property type="term" value="P:excitatory postsynaptic potential"/>
    <property type="evidence" value="ECO:0000266"/>
    <property type="project" value="RGD"/>
</dbReference>
<dbReference type="GO" id="GO:0006874">
    <property type="term" value="P:intracellular calcium ion homeostasis"/>
    <property type="evidence" value="ECO:0000266"/>
    <property type="project" value="RGD"/>
</dbReference>
<dbReference type="GO" id="GO:0035235">
    <property type="term" value="P:ionotropic glutamate receptor signaling pathway"/>
    <property type="evidence" value="ECO:0000314"/>
    <property type="project" value="RGD"/>
</dbReference>
<dbReference type="GO" id="GO:0007612">
    <property type="term" value="P:learning"/>
    <property type="evidence" value="ECO:0000266"/>
    <property type="project" value="RGD"/>
</dbReference>
<dbReference type="GO" id="GO:0007611">
    <property type="term" value="P:learning or memory"/>
    <property type="evidence" value="ECO:0000266"/>
    <property type="project" value="RGD"/>
</dbReference>
<dbReference type="GO" id="GO:0007616">
    <property type="term" value="P:long-term memory"/>
    <property type="evidence" value="ECO:0000266"/>
    <property type="project" value="RGD"/>
</dbReference>
<dbReference type="GO" id="GO:0060179">
    <property type="term" value="P:male mating behavior"/>
    <property type="evidence" value="ECO:0000266"/>
    <property type="project" value="RGD"/>
</dbReference>
<dbReference type="GO" id="GO:0007613">
    <property type="term" value="P:memory"/>
    <property type="evidence" value="ECO:0000266"/>
    <property type="project" value="RGD"/>
</dbReference>
<dbReference type="GO" id="GO:0098655">
    <property type="term" value="P:monoatomic cation transmembrane transport"/>
    <property type="evidence" value="ECO:0000314"/>
    <property type="project" value="UniProtKB"/>
</dbReference>
<dbReference type="GO" id="GO:0006812">
    <property type="term" value="P:monoatomic cation transport"/>
    <property type="evidence" value="ECO:0000266"/>
    <property type="project" value="RGD"/>
</dbReference>
<dbReference type="GO" id="GO:0043524">
    <property type="term" value="P:negative regulation of neuron apoptotic process"/>
    <property type="evidence" value="ECO:0000266"/>
    <property type="project" value="RGD"/>
</dbReference>
<dbReference type="GO" id="GO:0050905">
    <property type="term" value="P:neuromuscular process"/>
    <property type="evidence" value="ECO:0000266"/>
    <property type="project" value="RGD"/>
</dbReference>
<dbReference type="GO" id="GO:0070050">
    <property type="term" value="P:neuron cellular homeostasis"/>
    <property type="evidence" value="ECO:0000266"/>
    <property type="project" value="RGD"/>
</dbReference>
<dbReference type="GO" id="GO:0008355">
    <property type="term" value="P:olfactory learning"/>
    <property type="evidence" value="ECO:0000266"/>
    <property type="project" value="RGD"/>
</dbReference>
<dbReference type="GO" id="GO:0021586">
    <property type="term" value="P:pons maturation"/>
    <property type="evidence" value="ECO:0000266"/>
    <property type="project" value="RGD"/>
</dbReference>
<dbReference type="GO" id="GO:0043065">
    <property type="term" value="P:positive regulation of apoptotic process"/>
    <property type="evidence" value="ECO:0000266"/>
    <property type="project" value="RGD"/>
</dbReference>
<dbReference type="GO" id="GO:0010524">
    <property type="term" value="P:positive regulation of calcium ion transport into cytosol"/>
    <property type="evidence" value="ECO:0000316"/>
    <property type="project" value="ARUK-UCL"/>
</dbReference>
<dbReference type="GO" id="GO:1902952">
    <property type="term" value="P:positive regulation of dendritic spine maintenance"/>
    <property type="evidence" value="ECO:0000316"/>
    <property type="project" value="ARUK-UCL"/>
</dbReference>
<dbReference type="GO" id="GO:2000463">
    <property type="term" value="P:positive regulation of excitatory postsynaptic potential"/>
    <property type="evidence" value="ECO:0000314"/>
    <property type="project" value="BHF-UCL"/>
</dbReference>
<dbReference type="GO" id="GO:1903428">
    <property type="term" value="P:positive regulation of reactive oxygen species biosynthetic process"/>
    <property type="evidence" value="ECO:0000316"/>
    <property type="project" value="ARUK-UCL"/>
</dbReference>
<dbReference type="GO" id="GO:1900149">
    <property type="term" value="P:positive regulation of Schwann cell migration"/>
    <property type="evidence" value="ECO:0000315"/>
    <property type="project" value="RGD"/>
</dbReference>
<dbReference type="GO" id="GO:0051968">
    <property type="term" value="P:positive regulation of synaptic transmission, glutamatergic"/>
    <property type="evidence" value="ECO:0000314"/>
    <property type="project" value="ComplexPortal"/>
</dbReference>
<dbReference type="GO" id="GO:0045944">
    <property type="term" value="P:positive regulation of transcription by RNA polymerase II"/>
    <property type="evidence" value="ECO:0000266"/>
    <property type="project" value="RGD"/>
</dbReference>
<dbReference type="GO" id="GO:0060134">
    <property type="term" value="P:prepulse inhibition"/>
    <property type="evidence" value="ECO:0000266"/>
    <property type="project" value="RGD"/>
</dbReference>
<dbReference type="GO" id="GO:0018964">
    <property type="term" value="P:propylene metabolic process"/>
    <property type="evidence" value="ECO:0000266"/>
    <property type="project" value="RGD"/>
</dbReference>
<dbReference type="GO" id="GO:0051290">
    <property type="term" value="P:protein heterotetramerization"/>
    <property type="evidence" value="ECO:0000314"/>
    <property type="project" value="UniProtKB"/>
</dbReference>
<dbReference type="GO" id="GO:1903539">
    <property type="term" value="P:protein localization to postsynaptic membrane"/>
    <property type="evidence" value="ECO:0000266"/>
    <property type="project" value="RGD"/>
</dbReference>
<dbReference type="GO" id="GO:0065003">
    <property type="term" value="P:protein-containing complex assembly"/>
    <property type="evidence" value="ECO:0000314"/>
    <property type="project" value="RGD"/>
</dbReference>
<dbReference type="GO" id="GO:0050770">
    <property type="term" value="P:regulation of axonogenesis"/>
    <property type="evidence" value="ECO:0000266"/>
    <property type="project" value="RGD"/>
</dbReference>
<dbReference type="GO" id="GO:0010646">
    <property type="term" value="P:regulation of cell communication"/>
    <property type="evidence" value="ECO:0000266"/>
    <property type="project" value="RGD"/>
</dbReference>
<dbReference type="GO" id="GO:0048814">
    <property type="term" value="P:regulation of dendrite morphogenesis"/>
    <property type="evidence" value="ECO:0000266"/>
    <property type="project" value="RGD"/>
</dbReference>
<dbReference type="GO" id="GO:0048169">
    <property type="term" value="P:regulation of long-term neuronal synaptic plasticity"/>
    <property type="evidence" value="ECO:0000266"/>
    <property type="project" value="RGD"/>
</dbReference>
<dbReference type="GO" id="GO:0042391">
    <property type="term" value="P:regulation of membrane potential"/>
    <property type="evidence" value="ECO:0000266"/>
    <property type="project" value="RGD"/>
</dbReference>
<dbReference type="GO" id="GO:1904062">
    <property type="term" value="P:regulation of monoatomic cation transmembrane transport"/>
    <property type="evidence" value="ECO:0000314"/>
    <property type="project" value="ComplexPortal"/>
</dbReference>
<dbReference type="GO" id="GO:0043523">
    <property type="term" value="P:regulation of neuron apoptotic process"/>
    <property type="evidence" value="ECO:0000266"/>
    <property type="project" value="RGD"/>
</dbReference>
<dbReference type="GO" id="GO:0048168">
    <property type="term" value="P:regulation of neuronal synaptic plasticity"/>
    <property type="evidence" value="ECO:0000266"/>
    <property type="project" value="RGD"/>
</dbReference>
<dbReference type="GO" id="GO:0043576">
    <property type="term" value="P:regulation of respiratory gaseous exchange"/>
    <property type="evidence" value="ECO:0000266"/>
    <property type="project" value="RGD"/>
</dbReference>
<dbReference type="GO" id="GO:0051963">
    <property type="term" value="P:regulation of synapse assembly"/>
    <property type="evidence" value="ECO:0000266"/>
    <property type="project" value="RGD"/>
</dbReference>
<dbReference type="GO" id="GO:0048167">
    <property type="term" value="P:regulation of synaptic plasticity"/>
    <property type="evidence" value="ECO:0000250"/>
    <property type="project" value="UniProtKB"/>
</dbReference>
<dbReference type="GO" id="GO:0014075">
    <property type="term" value="P:response to amine"/>
    <property type="evidence" value="ECO:0000270"/>
    <property type="project" value="RGD"/>
</dbReference>
<dbReference type="GO" id="GO:0001975">
    <property type="term" value="P:response to amphetamine"/>
    <property type="evidence" value="ECO:0000266"/>
    <property type="project" value="RGD"/>
</dbReference>
<dbReference type="GO" id="GO:0051592">
    <property type="term" value="P:response to calcium ion"/>
    <property type="evidence" value="ECO:0000270"/>
    <property type="project" value="RGD"/>
</dbReference>
<dbReference type="GO" id="GO:0045471">
    <property type="term" value="P:response to ethanol"/>
    <property type="evidence" value="ECO:0000266"/>
    <property type="project" value="RGD"/>
</dbReference>
<dbReference type="GO" id="GO:0060992">
    <property type="term" value="P:response to fungicide"/>
    <property type="evidence" value="ECO:0000270"/>
    <property type="project" value="RGD"/>
</dbReference>
<dbReference type="GO" id="GO:1905429">
    <property type="term" value="P:response to glycine"/>
    <property type="evidence" value="ECO:0000266"/>
    <property type="project" value="RGD"/>
</dbReference>
<dbReference type="GO" id="GO:1903416">
    <property type="term" value="P:response to glycoside"/>
    <property type="evidence" value="ECO:0000270"/>
    <property type="project" value="RGD"/>
</dbReference>
<dbReference type="GO" id="GO:0001666">
    <property type="term" value="P:response to hypoxia"/>
    <property type="evidence" value="ECO:0000270"/>
    <property type="project" value="RGD"/>
</dbReference>
<dbReference type="GO" id="GO:0043278">
    <property type="term" value="P:response to morphine"/>
    <property type="evidence" value="ECO:0000266"/>
    <property type="project" value="RGD"/>
</dbReference>
<dbReference type="GO" id="GO:0048511">
    <property type="term" value="P:rhythmic process"/>
    <property type="evidence" value="ECO:0000314"/>
    <property type="project" value="RGD"/>
</dbReference>
<dbReference type="GO" id="GO:0019233">
    <property type="term" value="P:sensory perception of pain"/>
    <property type="evidence" value="ECO:0000266"/>
    <property type="project" value="RGD"/>
</dbReference>
<dbReference type="GO" id="GO:0035176">
    <property type="term" value="P:social behavior"/>
    <property type="evidence" value="ECO:0000266"/>
    <property type="project" value="RGD"/>
</dbReference>
<dbReference type="GO" id="GO:0035725">
    <property type="term" value="P:sodium ion transmembrane transport"/>
    <property type="evidence" value="ECO:0000250"/>
    <property type="project" value="UniProtKB"/>
</dbReference>
<dbReference type="GO" id="GO:0001964">
    <property type="term" value="P:startle response"/>
    <property type="evidence" value="ECO:0000266"/>
    <property type="project" value="RGD"/>
</dbReference>
<dbReference type="GO" id="GO:0001967">
    <property type="term" value="P:suckling behavior"/>
    <property type="evidence" value="ECO:0000266"/>
    <property type="project" value="RGD"/>
</dbReference>
<dbReference type="GO" id="GO:0035249">
    <property type="term" value="P:synaptic transmission, glutamatergic"/>
    <property type="evidence" value="ECO:0000266"/>
    <property type="project" value="RGD"/>
</dbReference>
<dbReference type="GO" id="GO:0006366">
    <property type="term" value="P:transcription by RNA polymerase II"/>
    <property type="evidence" value="ECO:0000266"/>
    <property type="project" value="RGD"/>
</dbReference>
<dbReference type="GO" id="GO:0008542">
    <property type="term" value="P:visual learning"/>
    <property type="evidence" value="ECO:0000266"/>
    <property type="project" value="RGD"/>
</dbReference>
<dbReference type="CDD" id="cd06379">
    <property type="entry name" value="PBP1_iGluR_NMDA_NR1"/>
    <property type="match status" value="1"/>
</dbReference>
<dbReference type="CDD" id="cd13719">
    <property type="entry name" value="PBP2_iGluR_NMDA_Nr1"/>
    <property type="match status" value="1"/>
</dbReference>
<dbReference type="FunFam" id="3.40.190.10:FF:000010">
    <property type="entry name" value="glutamate receptor ionotropic, NMDA 1 isoform X1"/>
    <property type="match status" value="1"/>
</dbReference>
<dbReference type="FunFam" id="3.40.50.2300:FF:000025">
    <property type="entry name" value="glutamate receptor ionotropic, NMDA 1 isoform X1"/>
    <property type="match status" value="1"/>
</dbReference>
<dbReference type="FunFam" id="3.40.190.10:FF:000012">
    <property type="entry name" value="glutamate receptor ionotropic, NMDA 1 isoform X2"/>
    <property type="match status" value="1"/>
</dbReference>
<dbReference type="FunFam" id="3.40.50.2300:FF:000053">
    <property type="entry name" value="glutamate receptor ionotropic, NMDA 1 isoform X2"/>
    <property type="match status" value="1"/>
</dbReference>
<dbReference type="FunFam" id="3.40.190.10:FF:000025">
    <property type="entry name" value="glutamate receptor ionotropic, NMDA 1 isoform X3"/>
    <property type="match status" value="1"/>
</dbReference>
<dbReference type="FunFam" id="1.10.287.70:FF:000087">
    <property type="entry name" value="glutamate receptor ionotropic, NMDA 1 isoform X4"/>
    <property type="match status" value="1"/>
</dbReference>
<dbReference type="Gene3D" id="1.10.287.70">
    <property type="match status" value="1"/>
</dbReference>
<dbReference type="Gene3D" id="3.40.50.2300">
    <property type="match status" value="2"/>
</dbReference>
<dbReference type="Gene3D" id="3.40.190.10">
    <property type="entry name" value="Periplasmic binding protein-like II"/>
    <property type="match status" value="3"/>
</dbReference>
<dbReference type="InterPro" id="IPR001828">
    <property type="entry name" value="ANF_lig-bd_rcpt"/>
</dbReference>
<dbReference type="InterPro" id="IPR019594">
    <property type="entry name" value="Glu/Gly-bd"/>
</dbReference>
<dbReference type="InterPro" id="IPR001508">
    <property type="entry name" value="Iono_Glu_rcpt_met"/>
</dbReference>
<dbReference type="InterPro" id="IPR015683">
    <property type="entry name" value="Ionotropic_Glu_rcpt"/>
</dbReference>
<dbReference type="InterPro" id="IPR001320">
    <property type="entry name" value="Iontro_rcpt_C"/>
</dbReference>
<dbReference type="InterPro" id="IPR049872">
    <property type="entry name" value="NMDA1-like_ligand-bd"/>
</dbReference>
<dbReference type="InterPro" id="IPR049873">
    <property type="entry name" value="NMDA1-like_N"/>
</dbReference>
<dbReference type="InterPro" id="IPR028082">
    <property type="entry name" value="Peripla_BP_I"/>
</dbReference>
<dbReference type="PANTHER" id="PTHR18966">
    <property type="entry name" value="IONOTROPIC GLUTAMATE RECEPTOR"/>
    <property type="match status" value="1"/>
</dbReference>
<dbReference type="Pfam" id="PF01094">
    <property type="entry name" value="ANF_receptor"/>
    <property type="match status" value="1"/>
</dbReference>
<dbReference type="Pfam" id="PF00060">
    <property type="entry name" value="Lig_chan"/>
    <property type="match status" value="1"/>
</dbReference>
<dbReference type="Pfam" id="PF10613">
    <property type="entry name" value="Lig_chan-Glu_bd"/>
    <property type="match status" value="1"/>
</dbReference>
<dbReference type="PRINTS" id="PR00177">
    <property type="entry name" value="NMDARECEPTOR"/>
</dbReference>
<dbReference type="SMART" id="SM00918">
    <property type="entry name" value="Lig_chan-Glu_bd"/>
    <property type="match status" value="1"/>
</dbReference>
<dbReference type="SMART" id="SM00079">
    <property type="entry name" value="PBPe"/>
    <property type="match status" value="1"/>
</dbReference>
<dbReference type="SUPFAM" id="SSF53822">
    <property type="entry name" value="Periplasmic binding protein-like I"/>
    <property type="match status" value="1"/>
</dbReference>
<dbReference type="SUPFAM" id="SSF53850">
    <property type="entry name" value="Periplasmic binding protein-like II"/>
    <property type="match status" value="1"/>
</dbReference>
<dbReference type="SUPFAM" id="SSF81324">
    <property type="entry name" value="Voltage-gated potassium channels"/>
    <property type="match status" value="1"/>
</dbReference>
<accession>P35439</accession>
<accession>Q62646</accession>
<organism>
    <name type="scientific">Rattus norvegicus</name>
    <name type="common">Rat</name>
    <dbReference type="NCBI Taxonomy" id="10116"/>
    <lineage>
        <taxon>Eukaryota</taxon>
        <taxon>Metazoa</taxon>
        <taxon>Chordata</taxon>
        <taxon>Craniata</taxon>
        <taxon>Vertebrata</taxon>
        <taxon>Euteleostomi</taxon>
        <taxon>Mammalia</taxon>
        <taxon>Eutheria</taxon>
        <taxon>Euarchontoglires</taxon>
        <taxon>Glires</taxon>
        <taxon>Rodentia</taxon>
        <taxon>Myomorpha</taxon>
        <taxon>Muroidea</taxon>
        <taxon>Muridae</taxon>
        <taxon>Murinae</taxon>
        <taxon>Rattus</taxon>
    </lineage>
</organism>
<comment type="function">
    <text evidence="2 3 6 7 9 10 11 13 14 17 21 22 25 27 29 30 31 33 34">Component of N-methyl-D-aspartate (NMDA) receptors (NMDARs) that function as heterotetrameric, ligand-gated cation channels with high calcium permeability and voltage-dependent block by Mg(2+) (PubMed:1350383, PubMed:1388270, PubMed:1834949, PubMed:8428958). NMDARs participate in synaptic plasticity for learning and memory formation by contributing to the long-term potentiation (LTP) (By similarity). Channel activation requires binding of the neurotransmitter L-glutamate to the GluN2 subunit, glycine or D-serine binding to the GluN1 subunit, plus membrane depolarization to eliminate channel inhibition by Mg(2+) (PubMed:11823786, PubMed:1350383, PubMed:1388270, PubMed:15996549, PubMed:18177891, PubMed:1834949, PubMed:24876489, PubMed:27135925, PubMed:27618671, PubMed:28384476, PubMed:28468946, PubMed:8428958). NMDARs mediate simultaneously the potasium efflux and the influx of calcium and sodium (By similarity). Each GluN2 or GluN3 subunit confers differential attributes to channel properties, including activation, deactivation and desensitization kinetics, pH sensitivity, Ca2(+) permeability, and binding to allosteric modulators (PubMed:10436042, PubMed:11160393, PubMed:11929923, PubMed:28384476, PubMed:9463421). Forms excitatory glycinergic receptor complexes with GluN3 alone which are activated by glycine binding to the GluN1 and GluN3 subunits (PubMed:11823786, PubMed:11929923, PubMed:12391275).</text>
</comment>
<comment type="catalytic activity">
    <reaction evidence="13 14 22 33">
        <text>Ca(2+)(in) = Ca(2+)(out)</text>
        <dbReference type="Rhea" id="RHEA:29671"/>
        <dbReference type="ChEBI" id="CHEBI:29108"/>
    </reaction>
</comment>
<comment type="catalytic activity">
    <reaction evidence="3">
        <text>Na(+)(in) = Na(+)(out)</text>
        <dbReference type="Rhea" id="RHEA:34963"/>
        <dbReference type="ChEBI" id="CHEBI:29101"/>
    </reaction>
</comment>
<comment type="catalytic activity">
    <reaction evidence="2">
        <text>K(+)(in) = K(+)(out)</text>
        <dbReference type="Rhea" id="RHEA:29463"/>
        <dbReference type="ChEBI" id="CHEBI:29103"/>
    </reaction>
</comment>
<comment type="activity regulation">
    <text evidence="9 32">NMDA glutamate receptor activity is potentiated by Zn2(+) in a dose-dependent fashion (PubMed:7684237). The potentiating effect of Zn2(+) is at submicromolar concentrations and its inhibitory action is at high micromolar to millimolar concentrations (PubMed:7684237). Excitatory glycine receptors are inhibited by D-serine at 100uM (PubMed:11823786).</text>
</comment>
<comment type="subunit">
    <text evidence="2 7 8 10 11 13 15 17 18 19 20 21 23 24 25 27 28 29 30 31 33 35 38">Heterotetramer; the NMDAR subunits are modular and harbor tiered domains that function in concert to regulate opening and closing of the cation-selective ion channel pore (PubMed:15996549, PubMed:16281028, PubMed:18177891, PubMed:21389213, PubMed:24876489, PubMed:27135925, PubMed:28384476, PubMed:28468946, Ref.36). Forms heterotetrameric channels composed of two GluN1/zeta subunits (GRIN1), and two identical GluN2/epsilon subunits (GRIN2A, GRIN2B, GRIN2C or GRIN2D) or GluN3 subunits (GRIN3A or GRIN3B) (in vitro) (PubMed:15996549, PubMed:16281028, PubMed:18177891, PubMed:21389213, PubMed:24876489, PubMed:27135925, PubMed:28384476, PubMed:28468946, Ref.36). Can also form heterotetrameric channels that contain at least two GluN1 subunits and at least two different GluN2 subunits (or a combination of one GluN2 and one GluN3 subunits) (in vitro) (PubMed:11160393, PubMed:11929923, PubMed:12391275). In vivo, the subunit composition may vary in function of the expression levels of the different subunits (Probable). Found in a complex with GRIN2A or GRIN2B, GRIN3A and PPP2CB (PubMed:11588171). Found in a complex with GRIN2A or GRIN2B and GRIN3B; (By similarity). Interacts with SNX27 (via PDZ domain); the interaction is required for recycling to the plasma membrane when endocytosed and prevent degradation in lysosomes (By similarity). Interacts with DLG4 and MPDZ (PubMed:15312654). Interacts with LRFN1 and LRFN2 (PubMed:16495444, PubMed:16630835). Interacts with MYZAP (PubMed:18849881). Found in a complex with DLG4 and PRR7 (PubMed:27458189). Found in a complex with GRIN2B and PRR7 (PubMed:27458189). Interacts with PRR7; the interaction is reduced following NMDA receptor activity (PubMed:27458189).</text>
</comment>
<comment type="interaction">
    <interactant intactId="EBI-877897">
        <id>P35439</id>
    </interactant>
    <interactant intactId="EBI-375655">
        <id>P31016</id>
        <label>Dlg4</label>
    </interactant>
    <organismsDiffer>false</organismsDiffer>
    <experiments>4</experiments>
</comment>
<comment type="interaction">
    <interactant intactId="EBI-877897">
        <id>P35439</id>
    </interactant>
    <interactant intactId="EBI-396905">
        <id>Q00960</id>
        <label>Grin2b</label>
    </interactant>
    <organismsDiffer>false</organismsDiffer>
    <experiments>13</experiments>
</comment>
<comment type="interaction">
    <interactant intactId="EBI-877897">
        <id>P35439</id>
    </interactant>
    <interactant intactId="EBI-877185">
        <id>Q460M5</id>
        <label>Lrfn2</label>
    </interactant>
    <organismsDiffer>false</organismsDiffer>
    <experiments>2</experiments>
</comment>
<comment type="interaction">
    <interactant intactId="EBI-877897">
        <id>P35439</id>
    </interactant>
    <interactant intactId="EBI-7713572">
        <id>Q9JJ40</id>
        <label>Pdzk1</label>
    </interactant>
    <organismsDiffer>false</organismsDiffer>
    <experiments>3</experiments>
</comment>
<comment type="interaction">
    <interactant intactId="EBI-877897">
        <id>P35439</id>
    </interactant>
    <interactant intactId="EBI-877092">
        <id>Q80TG9</id>
        <label>Lrfn2</label>
    </interactant>
    <organismsDiffer>true</organismsDiffer>
    <experiments>2</experiments>
</comment>
<comment type="interaction">
    <interactant intactId="EBI-877923">
        <id>P35439-1</id>
    </interactant>
    <interactant intactId="EBI-877092">
        <id>Q80TG9</id>
        <label>Lrfn2</label>
    </interactant>
    <organismsDiffer>true</organismsDiffer>
    <experiments>2</experiments>
</comment>
<comment type="interaction">
    <interactant intactId="EBI-877935">
        <id>P35439-4</id>
    </interactant>
    <interactant intactId="EBI-877092">
        <id>Q80TG9</id>
        <label>Lrfn2</label>
    </interactant>
    <organismsDiffer>true</organismsDiffer>
    <experiments>2</experiments>
</comment>
<comment type="interaction">
    <interactant intactId="EBI-15932497">
        <id>P35439-7</id>
    </interactant>
    <interactant intactId="EBI-396905">
        <id>Q00960</id>
        <label>Grin2b</label>
    </interactant>
    <organismsDiffer>false</organismsDiffer>
    <experiments>2</experiments>
</comment>
<comment type="subcellular location">
    <subcellularLocation>
        <location evidence="13 14 17 21 22 24 25 27 29 30 31 33">Cell membrane</location>
        <topology evidence="25 27">Multi-pass membrane protein</topology>
    </subcellularLocation>
    <subcellularLocation>
        <location evidence="26">Postsynaptic cell membrane</location>
    </subcellularLocation>
    <subcellularLocation>
        <location evidence="15">Synaptic cell membrane</location>
    </subcellularLocation>
    <subcellularLocation>
        <location evidence="26">Postsynaptic density membrane</location>
    </subcellularLocation>
    <text evidence="2 7">Synaptic cell membrane targeting is dependent of GRIN2B/GluN2B subunit (By similarity). Association with GRIN3A occurs in the endoplasmic reticulum (PubMed:11160393).</text>
</comment>
<comment type="alternative products">
    <event type="alternative splicing"/>
    <isoform>
        <id>P35439-1</id>
        <name>A</name>
        <sequence type="displayed"/>
    </isoform>
    <isoform>
        <id>P35439-2</id>
        <name>B</name>
        <sequence type="described" ref="VSP_000140"/>
    </isoform>
    <isoform>
        <id>P35439-3</id>
        <name>C</name>
        <name>NMDAR1-2a subunit</name>
        <sequence type="described" ref="VSP_000141"/>
    </isoform>
    <isoform>
        <id>P35439-4</id>
        <name>D</name>
        <sequence type="described" ref="VSP_000144"/>
    </isoform>
    <isoform>
        <id>P35439-5</id>
        <name>E</name>
        <sequence type="described" ref="VSP_000142 VSP_000143"/>
    </isoform>
    <isoform>
        <id>P35439-6</id>
        <name>F</name>
        <name>NMDAR1-2b subunit</name>
        <sequence type="described" ref="VSP_000140 VSP_000141"/>
    </isoform>
    <isoform>
        <id>P35439-7</id>
        <name>G</name>
        <name>NMDAR1-4b subunit</name>
        <sequence type="described" ref="VSP_000140 VSP_000142 VSP_000143"/>
    </isoform>
</comment>
<comment type="tissue specificity">
    <text evidence="13">Detected throughout the brain, in brain cortex, cerebellum, thalamus and olfactory bulb.</text>
</comment>
<comment type="domain">
    <text evidence="1">A hydrophobic region that gives rise to the prediction of a transmembrane span does not cross the membrane, but is part of a discontinuously helical region that dips into the membrane and is probably part of the pore and of the selectivity filter.</text>
</comment>
<comment type="domain">
    <text evidence="3">The extracellular N-terminal domain (ATD) is a site of allosteric regulation to modulate overall receptor function.</text>
</comment>
<comment type="domain">
    <text evidence="3">The ligand-binding domain (LBD) binds to glycine (GluN1 and GluN3 subunits) and glutamate (GluN2 subunits) and control opening of the channel gate.</text>
</comment>
<comment type="domain">
    <text evidence="3">The transmembrane domain (TMD) harbors the channel gate and pore.</text>
</comment>
<comment type="PTM">
    <text evidence="8 16">NMDA is probably regulated by C-terminal phosphorylation of an isoform of NR1 by PKC (PubMed:11588171, PubMed:15936117). Dephosphorylated on Ser-897 probably by protein phosphatase 2A (PPP2CB) (PubMed:11588171). Its phosphorylated state is influenced by the formation of the NMDAR-PPP2CB complex and the NMDAR channel activity (PubMed:11588171).</text>
</comment>
<comment type="similarity">
    <text evidence="38">Belongs to the glutamate-gated ion channel (TC 1.A.10.1) family. NR1/GRIN1 subfamily.</text>
</comment>
<feature type="signal peptide" evidence="4">
    <location>
        <begin position="1"/>
        <end position="18"/>
    </location>
</feature>
<feature type="chain" id="PRO_0000011589" description="Glutamate receptor ionotropic, NMDA 1">
    <location>
        <begin position="19"/>
        <end position="938"/>
    </location>
</feature>
<feature type="topological domain" description="Extracellular" evidence="25">
    <location>
        <begin position="19"/>
        <end position="559"/>
    </location>
</feature>
<feature type="transmembrane region" description="Helical" evidence="25">
    <location>
        <begin position="560"/>
        <end position="580"/>
    </location>
</feature>
<feature type="topological domain" description="Cytoplasmic" evidence="25">
    <location>
        <begin position="581"/>
        <end position="602"/>
    </location>
</feature>
<feature type="intramembrane region" description="Discontinuously helical" evidence="1">
    <location>
        <begin position="603"/>
        <end position="624"/>
    </location>
</feature>
<feature type="topological domain" description="Cytoplasmic" evidence="25">
    <location>
        <begin position="625"/>
        <end position="630"/>
    </location>
</feature>
<feature type="transmembrane region" description="Helical" evidence="25">
    <location>
        <begin position="631"/>
        <end position="647"/>
    </location>
</feature>
<feature type="topological domain" description="Extracellular" evidence="25">
    <location>
        <begin position="648"/>
        <end position="812"/>
    </location>
</feature>
<feature type="transmembrane region" description="Helical" evidence="25">
    <location>
        <begin position="813"/>
        <end position="833"/>
    </location>
</feature>
<feature type="topological domain" description="Cytoplasmic" evidence="25">
    <location>
        <begin position="834"/>
        <end position="938"/>
    </location>
</feature>
<feature type="region of interest" description="Pore-forming" evidence="1">
    <location>
        <begin position="603"/>
        <end position="624"/>
    </location>
</feature>
<feature type="region of interest" description="Disordered" evidence="5">
    <location>
        <begin position="889"/>
        <end position="938"/>
    </location>
</feature>
<feature type="compositionally biased region" description="Basic and acidic residues" evidence="5">
    <location>
        <begin position="916"/>
        <end position="927"/>
    </location>
</feature>
<feature type="binding site" evidence="18 25 29 31 35 47 55 56 62 63 64 65 67 68 69 70">
    <location>
        <position position="516"/>
    </location>
    <ligand>
        <name>glycine</name>
        <dbReference type="ChEBI" id="CHEBI:57305"/>
    </ligand>
</feature>
<feature type="binding site" evidence="12 18 25 29 31 35 40 47 55 56 62 63 64 65 68 69 70">
    <location>
        <position position="518"/>
    </location>
    <ligand>
        <name>glycine</name>
        <dbReference type="ChEBI" id="CHEBI:57305"/>
    </ligand>
</feature>
<feature type="binding site" evidence="12 18 25 29 31 35 40 47 55 56 62 63 64 65 67 68 69 70">
    <location>
        <position position="523"/>
    </location>
    <ligand>
        <name>glycine</name>
        <dbReference type="ChEBI" id="CHEBI:57305"/>
    </ligand>
</feature>
<feature type="binding site" evidence="12 18 25 29 31 35 40 47 55 56 62 63 64 65 67 68 69 70">
    <location>
        <position position="688"/>
    </location>
    <ligand>
        <name>glycine</name>
        <dbReference type="ChEBI" id="CHEBI:57305"/>
    </ligand>
</feature>
<feature type="binding site" evidence="18 25 29 31 35 47 55 56 62 63 64 65 67 68 69 70">
    <location>
        <position position="732"/>
    </location>
    <ligand>
        <name>glycine</name>
        <dbReference type="ChEBI" id="CHEBI:57305"/>
    </ligand>
</feature>
<feature type="modified residue" description="Phosphoserine; by PKC" evidence="3">
    <location>
        <position position="889"/>
    </location>
</feature>
<feature type="modified residue" description="Phosphoserine; by PKC" evidence="16">
    <location>
        <position position="890"/>
    </location>
</feature>
<feature type="modified residue" description="Phosphoserine; by PKC" evidence="3">
    <location>
        <position position="896"/>
    </location>
</feature>
<feature type="modified residue" description="Phosphoserine; by PKC" evidence="8">
    <location>
        <position position="897"/>
    </location>
</feature>
<feature type="glycosylation site" description="N-linked (GlcNAc...) asparagine" evidence="48">
    <location>
        <position position="61"/>
    </location>
</feature>
<feature type="glycosylation site" description="N-linked (GlcNAc...) asparagine" evidence="25 48 55 72">
    <location>
        <position position="203"/>
    </location>
</feature>
<feature type="glycosylation site" description="N-linked (GlcNAc...) asparagine" evidence="48">
    <location>
        <position position="239"/>
    </location>
</feature>
<feature type="glycosylation site" description="N-linked (GlcNAc...) asparagine" evidence="25 48 55">
    <location>
        <position position="276"/>
    </location>
</feature>
<feature type="glycosylation site" description="N-linked (GlcNAc...) asparagine" evidence="25 55">
    <location>
        <position position="300"/>
    </location>
</feature>
<feature type="glycosylation site" description="N-linked (GlcNAc...) asparagine" evidence="72">
    <location>
        <position position="350"/>
    </location>
</feature>
<feature type="glycosylation site" description="N-linked (GlcNAc...) asparagine" evidence="25 48 55 72">
    <location>
        <position position="368"/>
    </location>
</feature>
<feature type="glycosylation site" description="N-linked (GlcNAc...) asparagine" evidence="25 55 72">
    <location>
        <position position="440"/>
    </location>
</feature>
<feature type="glycosylation site" description="N-linked (GlcNAc...) asparagine" evidence="4">
    <location>
        <position position="471"/>
    </location>
</feature>
<feature type="glycosylation site" description="N-linked (GlcNAc...) asparagine" evidence="4">
    <location>
        <position position="491"/>
    </location>
</feature>
<feature type="glycosylation site" description="N-linked (GlcNAc...) asparagine" evidence="4">
    <location>
        <position position="674"/>
    </location>
</feature>
<feature type="glycosylation site" description="N-linked (GlcNAc...) asparagine" evidence="72">
    <location>
        <position position="771"/>
    </location>
</feature>
<feature type="disulfide bond" evidence="48 55">
    <location>
        <begin position="79"/>
        <end position="308"/>
    </location>
</feature>
<feature type="disulfide bond" evidence="40 41 42 43 44 45 46 47 49 50 51 52 54 55 56 62 63 64 65 66 67 68 69 70">
    <location>
        <begin position="420"/>
        <end position="454"/>
    </location>
</feature>
<feature type="disulfide bond" evidence="40 41 42 43 44 45 46 47 49 50 51 52 53 54 55 56 62 63 64 65 66 67 68 69 70">
    <location>
        <begin position="436"/>
        <end position="455"/>
    </location>
</feature>
<feature type="disulfide bond" evidence="40 41 42 43 45 46 49 50 53 55 62 67">
    <location>
        <begin position="744"/>
        <end position="798"/>
    </location>
</feature>
<feature type="splice variant" id="VSP_000140" description="In isoform B, isoform F and isoform G." evidence="38">
    <original>K</original>
    <variation>KSKKRNYENLDQLSYDNKRGPK</variation>
    <location>
        <position position="190"/>
    </location>
</feature>
<feature type="splice variant" id="VSP_000141" description="In isoform F and isoform C." evidence="38">
    <location>
        <begin position="864"/>
        <end position="900"/>
    </location>
</feature>
<feature type="splice variant" id="VSP_000142" description="In isoform E and isoform G." evidence="38">
    <original>DRKSGRAEPDPKKKATFRAITS</original>
    <variation>QYHPTDITGPLNLSDPSVSTVV</variation>
    <location>
        <begin position="864"/>
        <end position="885"/>
    </location>
</feature>
<feature type="splice variant" id="VSP_000143" description="In isoform E and isoform G." evidence="38">
    <location>
        <begin position="886"/>
        <end position="938"/>
    </location>
</feature>
<feature type="splice variant" id="VSP_000144" description="In isoform D." evidence="38">
    <original>STGGGRGALQNQKDTVLPRRAIEREEGQLQLCSRHRES</original>
    <variation>QYHPTDITGPLNLSDPSVSTVV</variation>
    <location>
        <begin position="901"/>
        <end position="938"/>
    </location>
</feature>
<feature type="strand" evidence="82">
    <location>
        <begin position="29"/>
        <end position="32"/>
    </location>
</feature>
<feature type="helix" evidence="82">
    <location>
        <begin position="36"/>
        <end position="50"/>
    </location>
</feature>
<feature type="strand" evidence="82">
    <location>
        <begin position="62"/>
        <end position="65"/>
    </location>
</feature>
<feature type="helix" evidence="82">
    <location>
        <begin position="71"/>
        <end position="85"/>
    </location>
</feature>
<feature type="strand" evidence="82">
    <location>
        <begin position="90"/>
        <end position="92"/>
    </location>
</feature>
<feature type="strand" evidence="85">
    <location>
        <begin position="96"/>
        <end position="99"/>
    </location>
</feature>
<feature type="helix" evidence="83">
    <location>
        <begin position="100"/>
        <end position="102"/>
    </location>
</feature>
<feature type="helix" evidence="82">
    <location>
        <begin position="105"/>
        <end position="113"/>
    </location>
</feature>
<feature type="strand" evidence="82">
    <location>
        <begin position="118"/>
        <end position="122"/>
    </location>
</feature>
<feature type="helix" evidence="82">
    <location>
        <begin position="127"/>
        <end position="129"/>
    </location>
</feature>
<feature type="turn" evidence="82">
    <location>
        <begin position="131"/>
        <end position="133"/>
    </location>
</feature>
<feature type="strand" evidence="82">
    <location>
        <begin position="138"/>
        <end position="141"/>
    </location>
</feature>
<feature type="helix" evidence="82">
    <location>
        <begin position="144"/>
        <end position="146"/>
    </location>
</feature>
<feature type="helix" evidence="82">
    <location>
        <begin position="149"/>
        <end position="157"/>
    </location>
</feature>
<feature type="strand" evidence="82">
    <location>
        <begin position="163"/>
        <end position="170"/>
    </location>
</feature>
<feature type="helix" evidence="82">
    <location>
        <begin position="171"/>
        <end position="186"/>
    </location>
</feature>
<feature type="strand" evidence="82">
    <location>
        <begin position="192"/>
        <end position="197"/>
    </location>
</feature>
<feature type="helix" evidence="82">
    <location>
        <begin position="205"/>
        <end position="211"/>
    </location>
</feature>
<feature type="strand" evidence="82">
    <location>
        <begin position="214"/>
        <end position="216"/>
    </location>
</feature>
<feature type="strand" evidence="82">
    <location>
        <begin position="218"/>
        <end position="222"/>
    </location>
</feature>
<feature type="helix" evidence="82">
    <location>
        <begin position="225"/>
        <end position="237"/>
    </location>
</feature>
<feature type="turn" evidence="84">
    <location>
        <begin position="238"/>
        <end position="241"/>
    </location>
</feature>
<feature type="strand" evidence="82">
    <location>
        <begin position="246"/>
        <end position="248"/>
    </location>
</feature>
<feature type="turn" evidence="82">
    <location>
        <begin position="252"/>
        <end position="254"/>
    </location>
</feature>
<feature type="helix" evidence="82">
    <location>
        <begin position="256"/>
        <end position="260"/>
    </location>
</feature>
<feature type="strand" evidence="82">
    <location>
        <begin position="267"/>
        <end position="273"/>
    </location>
</feature>
<feature type="helix" evidence="82">
    <location>
        <begin position="277"/>
        <end position="295"/>
    </location>
</feature>
<feature type="strand" evidence="82">
    <location>
        <begin position="298"/>
        <end position="300"/>
    </location>
</feature>
<feature type="turn" evidence="82">
    <location>
        <begin position="308"/>
        <end position="310"/>
    </location>
</feature>
<feature type="strand" evidence="82">
    <location>
        <begin position="316"/>
        <end position="318"/>
    </location>
</feature>
<feature type="helix" evidence="82">
    <location>
        <begin position="319"/>
        <end position="326"/>
    </location>
</feature>
<feature type="strand" evidence="83">
    <location>
        <begin position="330"/>
        <end position="333"/>
    </location>
</feature>
<feature type="strand" evidence="82">
    <location>
        <begin position="334"/>
        <end position="336"/>
    </location>
</feature>
<feature type="strand" evidence="76">
    <location>
        <begin position="338"/>
        <end position="340"/>
    </location>
</feature>
<feature type="strand" evidence="76">
    <location>
        <begin position="342"/>
        <end position="344"/>
    </location>
</feature>
<feature type="strand" evidence="83">
    <location>
        <begin position="346"/>
        <end position="348"/>
    </location>
</feature>
<feature type="strand" evidence="82">
    <location>
        <begin position="351"/>
        <end position="357"/>
    </location>
</feature>
<feature type="strand" evidence="82">
    <location>
        <begin position="360"/>
        <end position="367"/>
    </location>
</feature>
<feature type="strand" evidence="82">
    <location>
        <begin position="372"/>
        <end position="374"/>
    </location>
</feature>
<feature type="strand" evidence="84">
    <location>
        <begin position="382"/>
        <end position="384"/>
    </location>
</feature>
<feature type="strand" evidence="73">
    <location>
        <begin position="398"/>
        <end position="402"/>
    </location>
</feature>
<feature type="turn" evidence="73">
    <location>
        <begin position="406"/>
        <end position="408"/>
    </location>
</feature>
<feature type="strand" evidence="73">
    <location>
        <begin position="409"/>
        <end position="413"/>
    </location>
</feature>
<feature type="turn" evidence="78">
    <location>
        <begin position="416"/>
        <end position="418"/>
    </location>
</feature>
<feature type="strand" evidence="77">
    <location>
        <begin position="426"/>
        <end position="428"/>
    </location>
</feature>
<feature type="strand" evidence="73">
    <location>
        <begin position="434"/>
        <end position="439"/>
    </location>
</feature>
<feature type="turn" evidence="83">
    <location>
        <begin position="443"/>
        <end position="445"/>
    </location>
</feature>
<feature type="strand" evidence="73">
    <location>
        <begin position="450"/>
        <end position="457"/>
    </location>
</feature>
<feature type="helix" evidence="73">
    <location>
        <begin position="458"/>
        <end position="470"/>
    </location>
</feature>
<feature type="strand" evidence="73">
    <location>
        <begin position="474"/>
        <end position="478"/>
    </location>
</feature>
<feature type="strand" evidence="79">
    <location>
        <begin position="480"/>
        <end position="482"/>
    </location>
</feature>
<feature type="strand" evidence="73">
    <location>
        <begin position="487"/>
        <end position="489"/>
    </location>
</feature>
<feature type="strand" evidence="74">
    <location>
        <begin position="491"/>
        <end position="494"/>
    </location>
</feature>
<feature type="strand" evidence="73">
    <location>
        <begin position="496"/>
        <end position="498"/>
    </location>
</feature>
<feature type="helix" evidence="73">
    <location>
        <begin position="500"/>
        <end position="506"/>
    </location>
</feature>
<feature type="strand" evidence="73">
    <location>
        <begin position="511"/>
        <end position="513"/>
    </location>
</feature>
<feature type="helix" evidence="73">
    <location>
        <begin position="521"/>
        <end position="524"/>
    </location>
</feature>
<feature type="strand" evidence="73">
    <location>
        <begin position="527"/>
        <end position="529"/>
    </location>
</feature>
<feature type="strand" evidence="73">
    <location>
        <begin position="533"/>
        <end position="543"/>
    </location>
</feature>
<feature type="turn" evidence="82">
    <location>
        <begin position="553"/>
        <end position="557"/>
    </location>
</feature>
<feature type="helix" evidence="82">
    <location>
        <begin position="560"/>
        <end position="583"/>
    </location>
</feature>
<feature type="helix" evidence="82">
    <location>
        <begin position="603"/>
        <end position="615"/>
    </location>
</feature>
<feature type="helix" evidence="82">
    <location>
        <begin position="627"/>
        <end position="656"/>
    </location>
</feature>
<feature type="strand" evidence="80">
    <location>
        <begin position="666"/>
        <end position="669"/>
    </location>
</feature>
<feature type="helix" evidence="73">
    <location>
        <begin position="670"/>
        <end position="673"/>
    </location>
</feature>
<feature type="strand" evidence="81">
    <location>
        <begin position="677"/>
        <end position="679"/>
    </location>
</feature>
<feature type="strand" evidence="75">
    <location>
        <begin position="684"/>
        <end position="687"/>
    </location>
</feature>
<feature type="helix" evidence="73">
    <location>
        <begin position="688"/>
        <end position="694"/>
    </location>
</feature>
<feature type="helix" evidence="73">
    <location>
        <begin position="697"/>
        <end position="699"/>
    </location>
</feature>
<feature type="helix" evidence="73">
    <location>
        <begin position="700"/>
        <end position="706"/>
    </location>
</feature>
<feature type="turn" evidence="73">
    <location>
        <begin position="707"/>
        <end position="709"/>
    </location>
</feature>
<feature type="strand" evidence="73">
    <location>
        <begin position="711"/>
        <end position="713"/>
    </location>
</feature>
<feature type="helix" evidence="73">
    <location>
        <begin position="714"/>
        <end position="722"/>
    </location>
</feature>
<feature type="strand" evidence="73">
    <location>
        <begin position="727"/>
        <end position="732"/>
    </location>
</feature>
<feature type="helix" evidence="73">
    <location>
        <begin position="733"/>
        <end position="742"/>
    </location>
</feature>
<feature type="strand" evidence="73">
    <location>
        <begin position="746"/>
        <end position="748"/>
    </location>
</feature>
<feature type="strand" evidence="73">
    <location>
        <begin position="753"/>
        <end position="758"/>
    </location>
</feature>
<feature type="strand" evidence="73">
    <location>
        <begin position="761"/>
        <end position="763"/>
    </location>
</feature>
<feature type="helix" evidence="73">
    <location>
        <begin position="769"/>
        <end position="781"/>
    </location>
</feature>
<feature type="helix" evidence="73">
    <location>
        <begin position="784"/>
        <end position="792"/>
    </location>
</feature>
<feature type="strand" evidence="73">
    <location>
        <begin position="794"/>
        <end position="796"/>
    </location>
</feature>
<feature type="helix" evidence="82">
    <location>
        <begin position="811"/>
        <end position="825"/>
    </location>
</feature>
<feature type="helix" evidence="82">
    <location>
        <begin position="827"/>
        <end position="840"/>
    </location>
</feature>
<feature type="modified residue" description="Phosphoserine" evidence="71">
    <location sequence="P35439-5">
        <position position="877"/>
    </location>
</feature>
<feature type="modified residue" description="Phosphoserine" evidence="71">
    <location sequence="P35439-7">
        <position position="898"/>
    </location>
</feature>
<evidence type="ECO:0000250" key="1">
    <source>
        <dbReference type="UniProtKB" id="A0A1L8F5J9"/>
    </source>
</evidence>
<evidence type="ECO:0000250" key="2">
    <source>
        <dbReference type="UniProtKB" id="P35438"/>
    </source>
</evidence>
<evidence type="ECO:0000250" key="3">
    <source>
        <dbReference type="UniProtKB" id="Q05586"/>
    </source>
</evidence>
<evidence type="ECO:0000255" key="4"/>
<evidence type="ECO:0000256" key="5">
    <source>
        <dbReference type="SAM" id="MobiDB-lite"/>
    </source>
</evidence>
<evidence type="ECO:0000269" key="6">
    <source>
    </source>
</evidence>
<evidence type="ECO:0000269" key="7">
    <source>
    </source>
</evidence>
<evidence type="ECO:0000269" key="8">
    <source>
    </source>
</evidence>
<evidence type="ECO:0000269" key="9">
    <source>
    </source>
</evidence>
<evidence type="ECO:0000269" key="10">
    <source>
    </source>
</evidence>
<evidence type="ECO:0000269" key="11">
    <source>
    </source>
</evidence>
<evidence type="ECO:0000269" key="12">
    <source>
    </source>
</evidence>
<evidence type="ECO:0000269" key="13">
    <source>
    </source>
</evidence>
<evidence type="ECO:0000269" key="14">
    <source>
    </source>
</evidence>
<evidence type="ECO:0000269" key="15">
    <source>
    </source>
</evidence>
<evidence type="ECO:0000269" key="16">
    <source>
    </source>
</evidence>
<evidence type="ECO:0000269" key="17">
    <source>
    </source>
</evidence>
<evidence type="ECO:0000269" key="18">
    <source>
    </source>
</evidence>
<evidence type="ECO:0000269" key="19">
    <source>
    </source>
</evidence>
<evidence type="ECO:0000269" key="20">
    <source>
    </source>
</evidence>
<evidence type="ECO:0000269" key="21">
    <source>
    </source>
</evidence>
<evidence type="ECO:0000269" key="22">
    <source>
    </source>
</evidence>
<evidence type="ECO:0000269" key="23">
    <source>
    </source>
</evidence>
<evidence type="ECO:0000269" key="24">
    <source>
    </source>
</evidence>
<evidence type="ECO:0000269" key="25">
    <source>
    </source>
</evidence>
<evidence type="ECO:0000269" key="26">
    <source>
    </source>
</evidence>
<evidence type="ECO:0000269" key="27">
    <source>
    </source>
</evidence>
<evidence type="ECO:0000269" key="28">
    <source>
    </source>
</evidence>
<evidence type="ECO:0000269" key="29">
    <source>
    </source>
</evidence>
<evidence type="ECO:0000269" key="30">
    <source>
    </source>
</evidence>
<evidence type="ECO:0000269" key="31">
    <source>
    </source>
</evidence>
<evidence type="ECO:0000269" key="32">
    <source>
    </source>
</evidence>
<evidence type="ECO:0000269" key="33">
    <source>
    </source>
</evidence>
<evidence type="ECO:0000269" key="34">
    <source>
    </source>
</evidence>
<evidence type="ECO:0000269" key="35">
    <source ref="36"/>
</evidence>
<evidence type="ECO:0000303" key="36">
    <source>
    </source>
</evidence>
<evidence type="ECO:0000303" key="37">
    <source>
    </source>
</evidence>
<evidence type="ECO:0000305" key="38"/>
<evidence type="ECO:0000312" key="39">
    <source>
        <dbReference type="RGD" id="2736"/>
    </source>
</evidence>
<evidence type="ECO:0007744" key="40">
    <source>
        <dbReference type="PDB" id="1PB7"/>
    </source>
</evidence>
<evidence type="ECO:0007744" key="41">
    <source>
        <dbReference type="PDB" id="1PB8"/>
    </source>
</evidence>
<evidence type="ECO:0007744" key="42">
    <source>
        <dbReference type="PDB" id="1PB9"/>
    </source>
</evidence>
<evidence type="ECO:0007744" key="43">
    <source>
        <dbReference type="PDB" id="1PBQ"/>
    </source>
</evidence>
<evidence type="ECO:0007744" key="44">
    <source>
        <dbReference type="PDB" id="1Y1M"/>
    </source>
</evidence>
<evidence type="ECO:0007744" key="45">
    <source>
        <dbReference type="PDB" id="1Y1Z"/>
    </source>
</evidence>
<evidence type="ECO:0007744" key="46">
    <source>
        <dbReference type="PDB" id="1Y20"/>
    </source>
</evidence>
<evidence type="ECO:0007744" key="47">
    <source>
        <dbReference type="PDB" id="2A5T"/>
    </source>
</evidence>
<evidence type="ECO:0007744" key="48">
    <source>
        <dbReference type="PDB" id="3Q41"/>
    </source>
</evidence>
<evidence type="ECO:0007744" key="49">
    <source>
        <dbReference type="PDB" id="4KCC"/>
    </source>
</evidence>
<evidence type="ECO:0007744" key="50">
    <source>
        <dbReference type="PDB" id="4KFQ"/>
    </source>
</evidence>
<evidence type="ECO:0007744" key="51">
    <source>
        <dbReference type="PDB" id="4NF4"/>
    </source>
</evidence>
<evidence type="ECO:0007744" key="52">
    <source>
        <dbReference type="PDB" id="4NF5"/>
    </source>
</evidence>
<evidence type="ECO:0007744" key="53">
    <source>
        <dbReference type="PDB" id="4NF6"/>
    </source>
</evidence>
<evidence type="ECO:0007744" key="54">
    <source>
        <dbReference type="PDB" id="4NF8"/>
    </source>
</evidence>
<evidence type="ECO:0007744" key="55">
    <source>
        <dbReference type="PDB" id="4PE5"/>
    </source>
</evidence>
<evidence type="ECO:0007744" key="56">
    <source>
        <dbReference type="PDB" id="5DEX"/>
    </source>
</evidence>
<evidence type="ECO:0007744" key="57">
    <source>
        <dbReference type="PDB" id="5FXG"/>
    </source>
</evidence>
<evidence type="ECO:0007744" key="58">
    <source>
        <dbReference type="PDB" id="5FXH"/>
    </source>
</evidence>
<evidence type="ECO:0007744" key="59">
    <source>
        <dbReference type="PDB" id="5FXI"/>
    </source>
</evidence>
<evidence type="ECO:0007744" key="60">
    <source>
        <dbReference type="PDB" id="5FXJ"/>
    </source>
</evidence>
<evidence type="ECO:0007744" key="61">
    <source>
        <dbReference type="PDB" id="5FXK"/>
    </source>
</evidence>
<evidence type="ECO:0007744" key="62">
    <source>
        <dbReference type="PDB" id="5I56"/>
    </source>
</evidence>
<evidence type="ECO:0007744" key="63">
    <source>
        <dbReference type="PDB" id="5I57"/>
    </source>
</evidence>
<evidence type="ECO:0007744" key="64">
    <source>
        <dbReference type="PDB" id="5I58"/>
    </source>
</evidence>
<evidence type="ECO:0007744" key="65">
    <source>
        <dbReference type="PDB" id="5I59"/>
    </source>
</evidence>
<evidence type="ECO:0007744" key="66">
    <source>
        <dbReference type="PDB" id="5JTY"/>
    </source>
</evidence>
<evidence type="ECO:0007744" key="67">
    <source>
        <dbReference type="PDB" id="5U8C"/>
    </source>
</evidence>
<evidence type="ECO:0007744" key="68">
    <source>
        <dbReference type="PDB" id="5VIH"/>
    </source>
</evidence>
<evidence type="ECO:0007744" key="69">
    <source>
        <dbReference type="PDB" id="5VII"/>
    </source>
</evidence>
<evidence type="ECO:0007744" key="70">
    <source>
        <dbReference type="PDB" id="5VIJ"/>
    </source>
</evidence>
<evidence type="ECO:0007744" key="71">
    <source>
    </source>
</evidence>
<evidence type="ECO:0007744" key="72">
    <source>
    </source>
</evidence>
<evidence type="ECO:0007829" key="73">
    <source>
        <dbReference type="PDB" id="1PB7"/>
    </source>
</evidence>
<evidence type="ECO:0007829" key="74">
    <source>
        <dbReference type="PDB" id="1Y1M"/>
    </source>
</evidence>
<evidence type="ECO:0007829" key="75">
    <source>
        <dbReference type="PDB" id="1Y1Z"/>
    </source>
</evidence>
<evidence type="ECO:0007829" key="76">
    <source>
        <dbReference type="PDB" id="3Q41"/>
    </source>
</evidence>
<evidence type="ECO:0007829" key="77">
    <source>
        <dbReference type="PDB" id="4NF4"/>
    </source>
</evidence>
<evidence type="ECO:0007829" key="78">
    <source>
        <dbReference type="PDB" id="5I59"/>
    </source>
</evidence>
<evidence type="ECO:0007829" key="79">
    <source>
        <dbReference type="PDB" id="5VIH"/>
    </source>
</evidence>
<evidence type="ECO:0007829" key="80">
    <source>
        <dbReference type="PDB" id="5VII"/>
    </source>
</evidence>
<evidence type="ECO:0007829" key="81">
    <source>
        <dbReference type="PDB" id="5VIJ"/>
    </source>
</evidence>
<evidence type="ECO:0007829" key="82">
    <source>
        <dbReference type="PDB" id="7SAA"/>
    </source>
</evidence>
<evidence type="ECO:0007829" key="83">
    <source>
        <dbReference type="PDB" id="7YFH"/>
    </source>
</evidence>
<evidence type="ECO:0007829" key="84">
    <source>
        <dbReference type="PDB" id="7YFI"/>
    </source>
</evidence>
<evidence type="ECO:0007829" key="85">
    <source>
        <dbReference type="PDB" id="9ARF"/>
    </source>
</evidence>
<sequence>MSTMHLLTFALLFSCSFARAACDPKIVNIGAVLSTRKHEQMFREAVNQANKRHGSWKIQLNATSVTHKPNAIQMALSVCEDLISSQVYAILVSHPPTPNDHFTPTPVSYTAGFYRIPVLGLTTRMSIYSDKSIHLSFLRTVPPYSHQSSVWFEMMRVYNWNHIILLVSDDHEGRAAQKRLETLLEERESKAEKVLQFDPGTKNVTALLMEARELEARVIILSASEDDAATVYRAAAMLNMTGSGYVWLVGEREISGNALRYAPDGIIGLQLINGKNESAHISDAVGVVAQAVHELLEKENITDPPRGCVGNTNIWKTGPLFKRVLMSSKYADGVTGRVEFNEDGDRKFANYSIMNLQNRKLVQVGIYNGTHVIPNDRKIIWPGGETEKPRGYQMSTRLKIVTIHQEPFVYVKPTMSDGTCKEEFTVNGDPVKKVICTGPNDTSPGSPRHTVPQCCYGFCIDLLIKLARTMNFTYEVHLVADGKFGTQERVNNSNKKEWNGMMGELLSGQADMIVAPLTINNERAQYIEFSKPFKYQGLTILVKKEIPRSTLDSFMQPFQSTLWLLVGLSVHVVAVMLYLLDRFSPFGRFKVNSEEEEEDALTLSSAMWFSWGVLLNSGIGEGAPRSFSARILGMVWAGFAMIIVASYTANLAAFLVLDRPEERITGINDPRLRNPSDKFIYATVKQSSVDIYFRRQVELSTMYRHMEKHNYESAAEAIQAVRDNKLHAFIWDSAVLEFEASQKCDLVTTGELFFRSGFGIGMRKDSPWKQNVSLSILKSHENGFMEDLDKTWVRYQECDSRSNAPATLTFENMAGVFMLVAGGIVAGIFLIFIEIAYKRHKDARRKQMQLAFAAVNVWRKNLQDRKSGRAEPDPKKKATFRAITSTLASSFKRRRSSKDTSTGGGRGALQNQKDTVLPRRAIEREEGQLQLCSRHRES</sequence>